<comment type="function">
    <text evidence="3 6 7 8 12 15 18 19 21 22 23 29 30 33 34 36 37 38 39 40 41 44 45">Catalyzes the oxidative deamination of D-amino acids with broad substrate specificity (PubMed:16616139, PubMed:17088322, PubMed:17303072, PubMed:18544534, PubMed:20368421, PubMed:20567862, PubMed:20603179, PubMed:22203986, PubMed:23219954, PubMed:23391306, PubMed:25030849, PubMed:25701391, PubMed:29274788, PubMed:29326945, PubMed:30938755, PubMed:31799256, PubMed:32730563, PubMed:33484270, PubMed:34041270, PubMed:37558109, PubMed:38035964). Required to catabolize D-amino acids synthesized endogenously, of gastrointestinal bacterial origin or obtained from the diet, and to use these as nutrients (By similarity). Regulates the level of D-amino acid neurotransmitters in the brain, such as D-serine, a co-agonist of N-methyl D-aspartate (NMDA) receptors, and may modulate synaptic transmission (PubMed:17303072). Catalyzes the first step of the racemization of D-DOPA to L-DOPA, for possible use in an alternative dopamine biosynthesis pathway (PubMed:17303072). Also catalyzes the first step of the chiral inversion of N(gamma)-nitro-D-arginine methyl ester (D-NNA) to its L-enantiomer L-NNA that acts as a nitric oxide synthase inhibitor (By similarity). The hydrogen peroxide produced in the reaction provides protection against microbial infection; it contributes to the oxidative killing activity of phagocytic leukocytes and protects against bacterial colonization of the small intestine (By similarity). Enzyme secreted into the lumen of the intestine may not be catalytically active and could instead be proteolytically cleaved into peptides with antimicrobial activity (By similarity). The hydrogen peroxide produced in the reaction may also play a role in promoting cellular senescence in response to DNA damage (PubMed:30659069). Could act as a detoxifying agent which removes D-amino acids accumulated during aging (PubMed:17303072).</text>
</comment>
<comment type="catalytic activity">
    <reaction evidence="6 7 8 12 18 19 21 22 23 29 30 33 34 37 38 39 40 41 44 45 52">
        <text>a D-alpha-amino acid + O2 + H2O = a 2-oxocarboxylate + H2O2 + NH4(+)</text>
        <dbReference type="Rhea" id="RHEA:21816"/>
        <dbReference type="ChEBI" id="CHEBI:15377"/>
        <dbReference type="ChEBI" id="CHEBI:15379"/>
        <dbReference type="ChEBI" id="CHEBI:16240"/>
        <dbReference type="ChEBI" id="CHEBI:28938"/>
        <dbReference type="ChEBI" id="CHEBI:35179"/>
        <dbReference type="ChEBI" id="CHEBI:59871"/>
        <dbReference type="EC" id="1.4.3.3"/>
    </reaction>
    <physiologicalReaction direction="left-to-right" evidence="6 7 8 12 18 19 21 22 23 29 30 33 34 37 38 39 40 41 44 45 52">
        <dbReference type="Rhea" id="RHEA:21817"/>
    </physiologicalReaction>
</comment>
<comment type="catalytic activity">
    <reaction evidence="6 18 19 21 22 23 30 34 38 39 40 41 44 45">
        <text>D-alanine + O2 + H2O = pyruvate + H2O2 + NH4(+)</text>
        <dbReference type="Rhea" id="RHEA:22688"/>
        <dbReference type="ChEBI" id="CHEBI:15361"/>
        <dbReference type="ChEBI" id="CHEBI:15377"/>
        <dbReference type="ChEBI" id="CHEBI:15379"/>
        <dbReference type="ChEBI" id="CHEBI:16240"/>
        <dbReference type="ChEBI" id="CHEBI:28938"/>
        <dbReference type="ChEBI" id="CHEBI:57416"/>
    </reaction>
    <physiologicalReaction direction="left-to-right" evidence="6 18 19 21 22 23 30 34 38 39 40 41 44 45">
        <dbReference type="Rhea" id="RHEA:22689"/>
    </physiologicalReaction>
</comment>
<comment type="catalytic activity">
    <reaction evidence="34 38">
        <text>D-cysteine + O2 + H2O = 2-oxo-3-sulfanylpropanoate + H2O2 + NH4(+)</text>
        <dbReference type="Rhea" id="RHEA:78791"/>
        <dbReference type="ChEBI" id="CHEBI:15377"/>
        <dbReference type="ChEBI" id="CHEBI:15379"/>
        <dbReference type="ChEBI" id="CHEBI:16240"/>
        <dbReference type="ChEBI" id="CHEBI:28938"/>
        <dbReference type="ChEBI" id="CHEBI:35236"/>
        <dbReference type="ChEBI" id="CHEBI:57678"/>
    </reaction>
    <physiologicalReaction direction="left-to-right" evidence="34 38">
        <dbReference type="Rhea" id="RHEA:78792"/>
    </physiologicalReaction>
</comment>
<comment type="catalytic activity">
    <reaction evidence="7 8 34">
        <text>D-dopa + O2 + H2O = 3-(3,4-dihydroxyphenyl)pyruvate + H2O2 + NH4(+)</text>
        <dbReference type="Rhea" id="RHEA:70971"/>
        <dbReference type="ChEBI" id="CHEBI:15377"/>
        <dbReference type="ChEBI" id="CHEBI:15379"/>
        <dbReference type="ChEBI" id="CHEBI:16240"/>
        <dbReference type="ChEBI" id="CHEBI:28938"/>
        <dbReference type="ChEBI" id="CHEBI:29055"/>
        <dbReference type="ChEBI" id="CHEBI:149689"/>
    </reaction>
    <physiologicalReaction direction="left-to-right" evidence="7 8 34">
        <dbReference type="Rhea" id="RHEA:70972"/>
    </physiologicalReaction>
</comment>
<comment type="catalytic activity">
    <reaction evidence="18">
        <text>D-leucine + O2 + H2O = 4-methyl-2-oxopentanoate + H2O2 + NH4(+)</text>
        <dbReference type="Rhea" id="RHEA:78211"/>
        <dbReference type="ChEBI" id="CHEBI:15377"/>
        <dbReference type="ChEBI" id="CHEBI:15379"/>
        <dbReference type="ChEBI" id="CHEBI:16240"/>
        <dbReference type="ChEBI" id="CHEBI:17865"/>
        <dbReference type="ChEBI" id="CHEBI:28938"/>
        <dbReference type="ChEBI" id="CHEBI:143079"/>
    </reaction>
    <physiologicalReaction direction="left-to-right" evidence="18">
        <dbReference type="Rhea" id="RHEA:78212"/>
    </physiologicalReaction>
</comment>
<comment type="catalytic activity">
    <reaction evidence="2">
        <text>D-lysine + O2 + H2O = 6-amino-2-oxohexanoate + H2O2 + NH4(+)</text>
        <dbReference type="Rhea" id="RHEA:37583"/>
        <dbReference type="ChEBI" id="CHEBI:15377"/>
        <dbReference type="ChEBI" id="CHEBI:15379"/>
        <dbReference type="ChEBI" id="CHEBI:16240"/>
        <dbReference type="ChEBI" id="CHEBI:28938"/>
        <dbReference type="ChEBI" id="CHEBI:32557"/>
        <dbReference type="ChEBI" id="CHEBI:58183"/>
        <dbReference type="EC" id="1.4.3.3"/>
    </reaction>
    <physiologicalReaction direction="left-to-right" evidence="2">
        <dbReference type="Rhea" id="RHEA:37584"/>
    </physiologicalReaction>
</comment>
<comment type="catalytic activity">
    <reaction evidence="2">
        <text>D-methionine + O2 + H2O = 4-methylsulfanyl-2-oxobutanoate + H2O2 + NH4(+)</text>
        <dbReference type="Rhea" id="RHEA:78207"/>
        <dbReference type="ChEBI" id="CHEBI:15377"/>
        <dbReference type="ChEBI" id="CHEBI:15379"/>
        <dbReference type="ChEBI" id="CHEBI:16240"/>
        <dbReference type="ChEBI" id="CHEBI:16723"/>
        <dbReference type="ChEBI" id="CHEBI:28938"/>
        <dbReference type="ChEBI" id="CHEBI:57932"/>
    </reaction>
    <physiologicalReaction direction="left-to-right" evidence="2">
        <dbReference type="Rhea" id="RHEA:78208"/>
    </physiologicalReaction>
</comment>
<comment type="catalytic activity">
    <reaction evidence="18">
        <text>D-phenylalanine + O2 + H2O = 3-phenylpyruvate + H2O2 + NH4(+)</text>
        <dbReference type="Rhea" id="RHEA:70963"/>
        <dbReference type="ChEBI" id="CHEBI:15377"/>
        <dbReference type="ChEBI" id="CHEBI:15379"/>
        <dbReference type="ChEBI" id="CHEBI:16240"/>
        <dbReference type="ChEBI" id="CHEBI:18005"/>
        <dbReference type="ChEBI" id="CHEBI:28938"/>
        <dbReference type="ChEBI" id="CHEBI:57981"/>
    </reaction>
    <physiologicalReaction direction="left-to-right" evidence="18">
        <dbReference type="Rhea" id="RHEA:70964"/>
    </physiologicalReaction>
</comment>
<comment type="catalytic activity">
    <reaction evidence="6 37 39 45">
        <text>D-proline + O2 = 1-pyrroline-2-carboxylate + H2O2</text>
        <dbReference type="Rhea" id="RHEA:78259"/>
        <dbReference type="ChEBI" id="CHEBI:15379"/>
        <dbReference type="ChEBI" id="CHEBI:16240"/>
        <dbReference type="ChEBI" id="CHEBI:39785"/>
        <dbReference type="ChEBI" id="CHEBI:57726"/>
    </reaction>
    <physiologicalReaction direction="left-to-right" evidence="6 37 39 45">
        <dbReference type="Rhea" id="RHEA:78260"/>
    </physiologicalReaction>
</comment>
<comment type="catalytic activity">
    <reaction evidence="6 8 12 18 22 23 30 38 39 45 52">
        <text>D-serine + O2 + H2O = 3-hydroxypyruvate + H2O2 + NH4(+)</text>
        <dbReference type="Rhea" id="RHEA:70951"/>
        <dbReference type="ChEBI" id="CHEBI:15377"/>
        <dbReference type="ChEBI" id="CHEBI:15379"/>
        <dbReference type="ChEBI" id="CHEBI:16240"/>
        <dbReference type="ChEBI" id="CHEBI:17180"/>
        <dbReference type="ChEBI" id="CHEBI:28938"/>
        <dbReference type="ChEBI" id="CHEBI:35247"/>
    </reaction>
    <physiologicalReaction direction="left-to-right" evidence="6 8 12 18 22 23 30 38 39 45 52">
        <dbReference type="Rhea" id="RHEA:70952"/>
    </physiologicalReaction>
</comment>
<comment type="catalytic activity">
    <reaction evidence="18">
        <text>D-tryptophan + O2 + H2O = indole-3-pyruvate + H2O2 + NH4(+)</text>
        <dbReference type="Rhea" id="RHEA:78247"/>
        <dbReference type="ChEBI" id="CHEBI:15377"/>
        <dbReference type="ChEBI" id="CHEBI:15379"/>
        <dbReference type="ChEBI" id="CHEBI:16240"/>
        <dbReference type="ChEBI" id="CHEBI:17640"/>
        <dbReference type="ChEBI" id="CHEBI:28938"/>
        <dbReference type="ChEBI" id="CHEBI:57719"/>
    </reaction>
    <physiologicalReaction direction="left-to-right" evidence="18">
        <dbReference type="Rhea" id="RHEA:78248"/>
    </physiologicalReaction>
</comment>
<comment type="catalytic activity">
    <reaction evidence="18">
        <text>D-valine + O2 + H2O = 3-methyl-2-oxobutanoate + H2O2 + NH4(+)</text>
        <dbReference type="Rhea" id="RHEA:78203"/>
        <dbReference type="ChEBI" id="CHEBI:11851"/>
        <dbReference type="ChEBI" id="CHEBI:15377"/>
        <dbReference type="ChEBI" id="CHEBI:15379"/>
        <dbReference type="ChEBI" id="CHEBI:16240"/>
        <dbReference type="ChEBI" id="CHEBI:28938"/>
        <dbReference type="ChEBI" id="CHEBI:74338"/>
    </reaction>
    <physiologicalReaction direction="left-to-right" evidence="18">
        <dbReference type="Rhea" id="RHEA:78204"/>
    </physiologicalReaction>
</comment>
<comment type="cofactor">
    <cofactor evidence="6 7 8 11 14 16 19 24 25 28 30 33 34 35 38 39 41 42 44 45">
        <name>FAD</name>
        <dbReference type="ChEBI" id="CHEBI:57692"/>
    </cofactor>
</comment>
<comment type="activity regulation">
    <text evidence="12 14 16 18 19 23 24 25 28 29 35 39 40 42 43">Inhibited by benzoate, crotonate, thiolactomycin, chlorpromazine (CPZ), risperidone, haloperidol, sulpiride, aripiprazole, blonanserin, quetiapine, 4H-furo[3,2-b]pyrrole-5-carboxylic acid, and the substrate analog CF3-D-ala (3,3,3-trifluoro-D-alanine) (PubMed:18544534, PubMed:20521334, PubMed:20567862, PubMed:20603179, PubMed:23391306, PubMed:23631755, PubMed:25030849, PubMed:32730563). Inhibited by luvadaxistat, and 6-chloro-1,2-benzisoxazol-3(2H)-one (CBIO) (PubMed:33484270, PubMed:37289348). Also inhibited by 3-methylpyrazole-5-carboxylic acid (MPC), 3-hydroxyquinolin-2(1h)-one, 3-hydroxy-5-(2-phenylethyl)pyridin-2(1h)-one, 3-hydroxy-6-(2-phenylethyl)pyridazin-4(1h)-one, 4h-thieno[3,2-B]pyrole-5-carboxylic acid, 4-(4-chlorophenethyl)-1h-pyrrole-2-carboxylic acid, 3-phenethyl-4h-furo[3,2-B]pyrrole-5-carboxylic acid, 3-hydroxy-2h-chromen-2-one, 4-hydroxy-6-[2-(7-hydroxy-2-oxo-4-phenyl-2h-chromen-6-Yl)ethyl]pyridazin-3(2h)-one, 3-(7-hydroxy-2-oxo-4-phenyl-2h-chromen-6-Yl)propanoic acid, 5-chloro thiophene-3-carboxylic acid, 5-chloro thiophene-2-carboxylic acid, (3r)-3-(5,6-Dioxo-1,4,5,6-Tetrahydropyrazin-2-Yl)-2,3-dihydro-1,4-benzoxathiine-7-carbonitrile and 5-{2-[4-(trifluoromethyl)phenyl]ethyl}-1,4-dihydropyrazine-2,3-dione (PubMed:19438227, PubMed:23566269, PubMed:23631755, PubMed:25001371, PubMed:25030849, PubMed:30265959, PubMed:35482677). Meso-tartrate, valproate, duloxetine, eschitalopram, sertraline, biperiden, trihexyphenidyl and olanzapine have no effect on activity (PubMed:20567862, PubMed:25030849).</text>
</comment>
<comment type="biophysicochemical properties">
    <kinetics>
        <KM evidence="7 8">3.6 mM for D-serine</KM>
        <KM evidence="6 22 38">7.5 mM for D-serine (at 25 degrees Celsius and at pH 8.5)</KM>
        <KM evidence="44">7.41 mM for D-serine</KM>
        <KM evidence="12">5.9 mM for D-serine (at 25 degrees Celsius and at pH 8.5)</KM>
        <KM evidence="39">4.29 mM for D-serine (at 25 degrees Celsius and at pH 8)</KM>
        <KM evidence="45">3.65 mM for D-serine (at pH 8.5)</KM>
        <KM evidence="7 8">1.7 mM for D-proline</KM>
        <KM evidence="6">8.5 mM for D-proline (at 25 degrees Celsius and at pH 8.5)</KM>
        <KM evidence="39">1.23 mM for D-proline (at 25 degrees Celsius and at pH 8)</KM>
        <KM evidence="45">3.41 mM for D-proline (at pH 8.5)</KM>
        <KM evidence="7 8">1.1 mM for D-tyrosine</KM>
        <KM evidence="7 8">1.5 mM for D-DOPA</KM>
        <KM evidence="34">6 mM for D-DOPA (at 25 degrees Celsius and at pH 8.5)</KM>
        <KM evidence="7 8">1.2 mM for D-phenylalanine</KM>
        <KM evidence="7 8">0.9 mM for D-alanine</KM>
        <KM evidence="6 38">1.3 mM for D-alanine (at 25 degrees Celsius and at pH 8.5)</KM>
        <KM evidence="23">1.99 mM for D-alanine (at 37 degrees Celsius and at pH 8.3)</KM>
        <KM evidence="44">1.43 mM for D-alanine</KM>
        <KM evidence="39">0.75 mM for D-alanine (at 25 degrees Celsius and at pH 8)</KM>
        <KM evidence="22">1.1 mM for D-alanine (at 25 degrees Celsius and at pH 8.3)</KM>
        <KM evidence="30">8.8 mM for D-alanine (at 25 degrees Celsius and at pH 8.3)</KM>
        <KM evidence="45">0.44 mM for D-alanine (at pH 8.5)</KM>
        <KM evidence="6">180 mM for D-glycine (at 25 degrees Celsius and at pH 8.5)</KM>
        <KM evidence="34 38">0.6 mM for D-cysteine (at 25 degrees Celsius and at pH 8.5)</KM>
        <KM evidence="29">1.78 mM for D-kynurenine (D-KYN) (at 37 degrees Celsius and at pH 8.3)</KM>
        <KM evidence="34">0.7 mM for D-kynurenine (D-KYN) (at 25 degrees Celsius and at pH 8.5)</KM>
        <KM evidence="34">83.5 mM for D-cycloserine (at 25 degrees Celsius and at pH 8.5)</KM>
        <text evidence="6 12 22 23 30 34 38 39">kcat is 3 sec(-1) with D-serine as substrate (at 25 degrees Celsius and at pH 8.5) (PubMed:16616139, PubMed:23219954, PubMed:31799256). kcat is 2.3 sec(-1) with D-serine as substrate (at 25 degrees Celsius and at pH 8.5) (PubMed:18544534). kcat is 6.55 sec(-1) with D-serine as substrate (at 25 degrees Celsius and at pH 8) (PubMed:32730563). kcat is 10.2 sec(-1) with D-proline as substrate (at 25 degrees Celsius and at pH 8.5) (PubMed:16616139). kcat is 26.6 sec(-1) with D-proline as substrate (at 25 degrees Celsius and at pH 8) (PubMed:32730563). kcat is 40.5 sec(-1) with D-DOPA as substrate (at 25 degrees Celsius and at pH 8.5) (PubMed:29326945). kcat is 5.2 sec(-1) with D-alanine as substrate (at 25 degrees Celsius and at pH 8.5) (PubMed:16616139, PubMed:31799256, PubMed:23219954). kcat is 6.77 sec(-1) with D-alanine as substrate (at 37 degrees Celsius and at pH 8.3) (PubMed:23391306). kcat is 14.7 sec(-1) with D-alanine as substrate (at 25 degrees Celsius and at pH 8.3) (PubMed:25701391). kcat is 9.5 sec(-1) with D-alanine as substrate (at 25 degrees Celsius and at pH 8) (PubMed:32730563). kcat is 0.9 sec(-1) with D-glycine as substrate (at 25 degrees Celsius and at pH 8.5) (PubMed:16616139). kcat is 8.6 sec(-1) with D-cysteine as substrate (at 25 degrees Celsius and at pH 8.5) (PubMed:29326945, PubMed:31799256). kcat is 0.09 sec(-1) with D-kynurenine as substrate (at 25 degrees Celsius and at pH 8.5) (PubMed:29326945). kcat is 0.77 sec(-1) with D-cycloserine as substrate (at 25 degrees Celsius and at pH 8.5) (PubMed:29326945).</text>
    </kinetics>
    <phDependence>
        <text evidence="34">Optimum pH is 9.5-10.</text>
    </phDependence>
    <temperatureDependence>
        <text evidence="34">Optimum temperature is 45 degrees Celsius.</text>
    </temperatureDependence>
</comment>
<comment type="subunit">
    <text evidence="1 5 6 7 11 12 15 16 20 27 32 33 44 45">Homodimer (PubMed:16616139, PubMed:17088322, PubMed:18455394, PubMed:20368421, PubMed:28629864, PubMed:29274788, PubMed:37558109, PubMed:38035964). Interacts with DAOA; the interaction is direct, can occur in the presence or absence of FAD or substrate bound to DAO, and results in a complex containing two DAO homodimers and 2 DAOA monomers (PubMed:12364586, PubMed:18544534, PubMed:20521334, PubMed:21679769, PubMed:24362575). Interacts with BSN (via coiled region); the interaction is direct and inhibits DAO enzyme activity (By similarity).</text>
</comment>
<comment type="interaction">
    <interactant intactId="EBI-3908043">
        <id>P14920</id>
    </interactant>
    <interactant intactId="EBI-739890">
        <id>Q9P2K6</id>
        <label>KLHL42</label>
    </interactant>
    <organismsDiffer>false</organismsDiffer>
    <experiments>3</experiments>
</comment>
<comment type="interaction">
    <interactant intactId="EBI-3908043">
        <id>P14920</id>
    </interactant>
    <interactant intactId="EBI-1053424">
        <id>O43741</id>
        <label>PRKAB2</label>
    </interactant>
    <organismsDiffer>false</organismsDiffer>
    <experiments>6</experiments>
</comment>
<comment type="subcellular location">
    <subcellularLocation>
        <location evidence="9 12 15 20 22 38 50 53">Peroxisome matrix</location>
    </subcellularLocation>
    <subcellularLocation>
        <location evidence="12 20 38">Cytoplasm</location>
        <location evidence="12 20 38">Cytosol</location>
    </subcellularLocation>
    <subcellularLocation>
        <location evidence="1">Presynaptic active zone</location>
    </subcellularLocation>
    <subcellularLocation>
        <location evidence="31">Secreted</location>
    </subcellularLocation>
    <text evidence="1 20 31 38">Transiently present in the cytosol before being delivered to the peroxisomes (PubMed:21679769, PubMed:31799256). In the cerebellum, a fraction of protein localizes to the presynaptic active zone, where its activity is regulated by protein BSN (By similarity). Secreted into the lumen of the small intestine (PubMed:27670111).</text>
</comment>
<comment type="tissue specificity">
    <text evidence="10 12 13 26 31 41">Expressed in the cerebellum, in astrocytes of the cortex, in motor neurons and fibers of the lumbar spinal cord (at protein level) (PubMed:17880399, PubMed:18544534, PubMed:18560437, PubMed:24138986, PubMed:34041270). Expressed in goblet cells of the small intestine (at protein level) (PubMed:27670111). Increased in the cerebellum of schizophrenic patients (at protein level) (PubMed:17880399, PubMed:18560437). Decreased in motor neurons of the spinal cord of patients with amyotrophic lateral sclerosis (at protein level) (PubMed:24138986). Expressed in the cerebellum, spinal cord, kidney, and thalamus (PubMed:17880399). Abundant in glia of the cerebellum and predominantly neuronal in the dorsolateral prefrontal cortex, hippocampus and substantia nigra (PubMed:17880399).</text>
</comment>
<comment type="induction">
    <text evidence="36">Induced in cells following exposure to etoposide.</text>
</comment>
<comment type="PTM">
    <text evidence="41">Phosphorylated in the cerebellum; probably not by PRKACA, PRKCA or PRKCE.</text>
</comment>
<comment type="PTM">
    <text evidence="41">May be S-nitrosylated, which partially inactivates the enzyme.</text>
</comment>
<comment type="disease" evidence="5">
    <disease id="DI-03626">
        <name>Schizophrenia</name>
        <acronym>SCZD</acronym>
        <description>A complex, multifactorial psychotic disorder or group of disorders characterized by disturbances in the form and content of thought (e.g. delusions, hallucinations), in mood (e.g. inappropriate affect), in sense of self and relationship to the external world (e.g. loss of ego boundaries, withdrawal), and in behavior (e.g bizarre or apparently purposeless behavior). Although it affects emotions, it is distinguished from mood disorders in which such disturbances are primary. Similarly, there may be mild impairment of cognitive function, and it is distinguished from the dementias in which disturbed cognitive function is considered primary. Some patients manifest schizophrenic as well as bipolar disorder symptoms and are often given the diagnosis of schizoaffective disorder.</description>
        <dbReference type="MIM" id="181500"/>
    </disease>
    <text>Disease susceptibility may be associated with variants affecting the gene represented in this entry.</text>
</comment>
<comment type="disease" evidence="15 17 21 22 26 30 44 45 46">
    <disease id="DI-00107">
        <name>Amyotrophic lateral sclerosis</name>
        <acronym>ALS</acronym>
        <description>A neurodegenerative disorder affecting upper motor neurons in the brain and lower motor neurons in the brain stem and spinal cord, resulting in fatal paralysis. Sensory abnormalities are absent. The pathologic hallmarks of the disease include pallor of the corticospinal tract due to loss of motor neurons, presence of ubiquitin-positive inclusions within surviving motor neurons, and deposition of pathologic aggregates. The etiology of amyotrophic lateral sclerosis is likely to be multifactorial, involving both genetic and environmental factors. The disease is inherited in 5-10% of the cases.</description>
        <dbReference type="MIM" id="105400"/>
    </disease>
    <text>Disease susceptibility may be associated with variants affecting the gene represented in this entry.</text>
</comment>
<comment type="similarity">
    <text evidence="47">Belongs to the DAMOX/DASOX family.</text>
</comment>
<protein>
    <recommendedName>
        <fullName>D-amino-acid oxidase</fullName>
        <shortName>DAAO</shortName>
        <shortName>DAMOX</shortName>
        <shortName>DAO</shortName>
        <ecNumber evidence="6 12 18 19 23 29 34">1.4.3.3</ecNumber>
    </recommendedName>
</protein>
<feature type="chain" id="PRO_0000162761" description="D-amino-acid oxidase">
    <location>
        <begin position="1"/>
        <end position="347"/>
    </location>
</feature>
<feature type="region of interest" description="Required for protein stability" evidence="40">
    <location>
        <begin position="1"/>
        <end position="16"/>
    </location>
</feature>
<feature type="region of interest" description="Active site lid that may open upon substrate/product migration in and out of the active site and close to increase the hydrophobicity of the active site, to make the hydride transfer reaction more efficient" evidence="2">
    <location>
        <begin position="216"/>
        <end position="228"/>
    </location>
</feature>
<feature type="short sequence motif" description="Microbody targeting signal" evidence="4">
    <location>
        <begin position="345"/>
        <end position="347"/>
    </location>
</feature>
<feature type="binding site" evidence="7 11 14 24 25 28 35 39 42 45 60 65 66 67 68 69 70 71 72 73 74 75 76 77 78 79 80 81">
    <location>
        <position position="8"/>
    </location>
    <ligand>
        <name>FAD</name>
        <dbReference type="ChEBI" id="CHEBI:57692"/>
    </ligand>
</feature>
<feature type="binding site" evidence="8 63 64">
    <location>
        <position position="9"/>
    </location>
    <ligand>
        <name>FAD</name>
        <dbReference type="ChEBI" id="CHEBI:57692"/>
    </ligand>
</feature>
<feature type="binding site" evidence="7 24 25 60 67 68 69 71 73">
    <location>
        <position position="10"/>
    </location>
    <ligand>
        <name>FAD</name>
        <dbReference type="ChEBI" id="CHEBI:57692"/>
    </ligand>
</feature>
<feature type="binding site" evidence="7 11 14 24 25 28 35 39 42 45 60 65 66 67 68 69 70 71 72 73 74 75 76 77 78 79 80 81">
    <location>
        <position position="11"/>
    </location>
    <ligand>
        <name>FAD</name>
        <dbReference type="ChEBI" id="CHEBI:57692"/>
    </ligand>
</feature>
<feature type="binding site" evidence="7 8 11 14 24 25 28 35 42 45 60 61 62 63 64 65 66 67 68 69 70 71 72 73 74 75 77 79 80 81">
    <location>
        <position position="37"/>
    </location>
    <ligand>
        <name>FAD</name>
        <dbReference type="ChEBI" id="CHEBI:57692"/>
    </ligand>
</feature>
<feature type="binding site" evidence="7 8 11 14 24 25 28 35 39 42 45 60 61 62 63 64 65 66 67 68 69 70 71 72 73 74 75 76 77 78 79 80 81">
    <location>
        <position position="38"/>
    </location>
    <ligand>
        <name>FAD</name>
        <dbReference type="ChEBI" id="CHEBI:57692"/>
    </ligand>
</feature>
<feature type="binding site" evidence="11 65">
    <location>
        <position position="43"/>
    </location>
    <ligand>
        <name>FAD</name>
        <dbReference type="ChEBI" id="CHEBI:57692"/>
    </ligand>
</feature>
<feature type="binding site" evidence="7 8 11 14 24 25 28 35 39 42 45 60 61 62 63 64 65 66 69 70 71 72 73 74 75 76 77 79 80 81">
    <location>
        <position position="44"/>
    </location>
    <ligand>
        <name>FAD</name>
        <dbReference type="ChEBI" id="CHEBI:57692"/>
    </ligand>
</feature>
<feature type="binding site" evidence="7 8 11 14 24 25 28 35 39 42 45 60 61 62 63 64 65 66 67 68 69 70 71 72 73 74 75 76 77 78 79 80 81">
    <location>
        <position position="45"/>
    </location>
    <ligand>
        <name>FAD</name>
        <dbReference type="ChEBI" id="CHEBI:57692"/>
    </ligand>
</feature>
<feature type="binding site" evidence="2">
    <location>
        <position position="49"/>
    </location>
    <ligand>
        <name>FAD</name>
        <dbReference type="ChEBI" id="CHEBI:57692"/>
    </ligand>
</feature>
<feature type="binding site" evidence="8 11 14 24 25 28 35 39 42 45 61 62 63 64 65 66 67 68 69 70 71 72 73 74 75 77 78 79 80 81">
    <location>
        <position position="50"/>
    </location>
    <ligand>
        <name>FAD</name>
        <dbReference type="ChEBI" id="CHEBI:57692"/>
    </ligand>
</feature>
<feature type="binding site" evidence="7 8 11 14 24 25 28 35 39 42 45 60 61 62 63 64 65 66 67 68 69 70 71 72 73 74 75 76 77 78 79 80 81">
    <location>
        <position position="51"/>
    </location>
    <ligand>
        <name>FAD</name>
        <dbReference type="ChEBI" id="CHEBI:57692"/>
    </ligand>
</feature>
<feature type="binding site" evidence="8 64">
    <location>
        <position position="53"/>
    </location>
    <ligand>
        <name>D-dopa</name>
        <dbReference type="ChEBI" id="CHEBI:149689"/>
    </ligand>
</feature>
<feature type="binding site" evidence="2">
    <location>
        <position position="163"/>
    </location>
    <ligand>
        <name>FAD</name>
        <dbReference type="ChEBI" id="CHEBI:57692"/>
    </ligand>
</feature>
<feature type="binding site" evidence="7 8 11 14 24 25 28 35 39 42 45 60 61 62 63 64 65 66 67 68 69 70 71 72 73 74 75 76 77 78 79 80 81">
    <location>
        <position position="164"/>
    </location>
    <ligand>
        <name>FAD</name>
        <dbReference type="ChEBI" id="CHEBI:57692"/>
    </ligand>
</feature>
<feature type="binding site" evidence="73">
    <location>
        <position position="182"/>
    </location>
    <ligand>
        <name>FAD</name>
        <dbReference type="ChEBI" id="CHEBI:57692"/>
    </ligand>
</feature>
<feature type="binding site" evidence="49 63">
    <location>
        <position position="224"/>
    </location>
    <ligand>
        <name>D-serine</name>
        <dbReference type="ChEBI" id="CHEBI:35247"/>
    </ligand>
</feature>
<feature type="binding site" evidence="2">
    <location>
        <position position="228"/>
    </location>
    <ligand>
        <name>D-proline</name>
        <dbReference type="ChEBI" id="CHEBI:57726"/>
    </ligand>
</feature>
<feature type="binding site" evidence="48 49 51 60 63 65">
    <location>
        <position position="228"/>
    </location>
    <ligand>
        <name>D-serine</name>
        <dbReference type="ChEBI" id="CHEBI:35247"/>
    </ligand>
</feature>
<feature type="binding site" evidence="8 64">
    <location>
        <position position="283"/>
    </location>
    <ligand>
        <name>D-dopa</name>
        <dbReference type="ChEBI" id="CHEBI:149689"/>
    </ligand>
</feature>
<feature type="binding site" evidence="2">
    <location>
        <position position="283"/>
    </location>
    <ligand>
        <name>D-proline</name>
        <dbReference type="ChEBI" id="CHEBI:57726"/>
    </ligand>
</feature>
<feature type="binding site" evidence="8 48 51 60 62 63 65">
    <location>
        <position position="283"/>
    </location>
    <ligand>
        <name>D-serine</name>
        <dbReference type="ChEBI" id="CHEBI:35247"/>
    </ligand>
</feature>
<feature type="binding site" evidence="8 11 24 25 61 62 64 65 67 68 69 71">
    <location>
        <position position="283"/>
    </location>
    <ligand>
        <name>FAD</name>
        <dbReference type="ChEBI" id="CHEBI:57692"/>
    </ligand>
</feature>
<feature type="binding site" evidence="7 8 11 14 24 25 28 35 39 42 45 60 61 62 63 64 65 66 67 68 69 70 71 72 73 74 75 76 77 78 79 80 81">
    <location>
        <position position="312"/>
    </location>
    <ligand>
        <name>FAD</name>
        <dbReference type="ChEBI" id="CHEBI:57692"/>
    </ligand>
</feature>
<feature type="binding site" evidence="8 64">
    <location>
        <position position="313"/>
    </location>
    <ligand>
        <name>D-dopa</name>
        <dbReference type="ChEBI" id="CHEBI:149689"/>
    </ligand>
</feature>
<feature type="binding site" evidence="2">
    <location>
        <position position="313"/>
    </location>
    <ligand>
        <name>D-proline</name>
        <dbReference type="ChEBI" id="CHEBI:57726"/>
    </ligand>
</feature>
<feature type="binding site" evidence="49 51 63 65">
    <location>
        <position position="313"/>
    </location>
    <ligand>
        <name>D-serine</name>
        <dbReference type="ChEBI" id="CHEBI:35247"/>
    </ligand>
</feature>
<feature type="binding site" evidence="7 8 24 25 28 60 61 62 64 67 68 69 71 72 73 75">
    <location>
        <position position="313"/>
    </location>
    <ligand>
        <name>FAD</name>
        <dbReference type="ChEBI" id="CHEBI:57692"/>
    </ligand>
</feature>
<feature type="binding site" evidence="7 8 11 14 24 25 28 35 39 42 45 60 61 63 64 65 66 67 68 69 70 71 72 73 74 76 77 78 79 80 81">
    <location>
        <position position="315"/>
    </location>
    <ligand>
        <name>FAD</name>
        <dbReference type="ChEBI" id="CHEBI:57692"/>
    </ligand>
</feature>
<feature type="binding site" evidence="7 8 11 14 24 25 28 35 39 42 60 61 62 63 64 65 66 67 68 69 70 71 72 73 74 75 76 77 78 80">
    <location>
        <position position="316"/>
    </location>
    <ligand>
        <name>FAD</name>
        <dbReference type="ChEBI" id="CHEBI:57692"/>
    </ligand>
</feature>
<feature type="binding site" evidence="7 8 11 14 24 25 28 35 39 42 45 60 61 62 63 64 65 66 67 68 69 70 71 72 73 74 75 76 77 78 79 80 81">
    <location>
        <position position="317"/>
    </location>
    <ligand>
        <name>FAD</name>
        <dbReference type="ChEBI" id="CHEBI:57692"/>
    </ligand>
</feature>
<feature type="sequence variant" id="VAR_089068" description="Found in a patient with ALS; impairs FAD binding; 20-fold decreased affinity for D-serine; 300-fold decreased affinity for D-alanine; 3-fold decreased affinity for D-proline; dbSNP:rs368093324." evidence="17 45">
    <original>R</original>
    <variation>H</variation>
    <location>
        <position position="38"/>
    </location>
</feature>
<feature type="sequence variant" id="VAR_089069" description="Found in a patient with ALS; abolishes activity; impairs FAD binding; over 900-fold decreased affinity for D-alanine; over 200-fold decreased affinity for D-serine; leads to the formation of protein aggregates; increases the occurrence of cell death." evidence="44 46">
    <original>E</original>
    <variation>K</variation>
    <location>
        <position position="121"/>
    </location>
</feature>
<feature type="sequence variant" id="VAR_089070" description="Found in a patient with ALS; impairs FAD binding; over 200-fold decreased affinity for D-serine; 1800-fold decreased affinity for D-alanine; dbSNP:rs200850756." evidence="30">
    <original>R</original>
    <variation>Q</variation>
    <location>
        <position position="199"/>
    </location>
</feature>
<feature type="sequence variant" id="VAR_089071" description="Found in a patient with ALS; decreased function in D-serine catabolic process; 3- to 4-fold decrease in Vmax with D-serine, D-alanine and D-proline as substrates; impairs FAD binding; decreased affinity for D-serine, D-alanine and D-proline; leads to tetramerization of the holoenzyme; leads to the formation of ubiquitinated protein aggregates; promotes induction of apoptosis; causes cell death in motor neurons in a manner at least partially dependent on the N-methyl-D-aspartic acid receptor; dbSNP:rs139166976." evidence="15 21 26 30 45">
    <original>R</original>
    <variation>W</variation>
    <location>
        <position position="199"/>
    </location>
</feature>
<feature type="sequence variant" id="VAR_089072" description="Found in a patient with ALS; impairs FAD binding; decreased affinity for D-serine, D-alanine and D-proline; leads to tetramerization of the holoenzyme." evidence="45">
    <original>Q</original>
    <variation>R</variation>
    <location>
        <position position="201"/>
    </location>
</feature>
<feature type="sequence variant" id="VAR_089073" description="Found in a patient with ALS; no effect on activity; decreases the cellular ratio of D-serine to L-serine.; dbSNP:rs111347906." evidence="30">
    <original>W</original>
    <variation>R</variation>
    <location>
        <position position="209"/>
    </location>
</feature>
<feature type="sequence variant" id="VAR_089074" description="Leads to the formation of ubiquitinated protein aggregates; impairs targeting to peroxisomes; results in abnormal peroxisomal morphology; decreases cell viability; dbSNP:rs4262766." evidence="22">
    <original>G</original>
    <variation>V</variation>
    <location>
        <position position="331"/>
    </location>
</feature>
<feature type="mutagenesis site" description="Increases affinity for the FAD cofactor and D-serine. Decreases the cellular ratio of D-serine to L-serine." evidence="22">
    <original>D</original>
    <variation>H</variation>
    <location>
        <position position="31"/>
    </location>
</feature>
<feature type="mutagenesis site" description="Increases activity and FAD-binding. Decreases protein localization to peroxisomes with protein mislocalized to the nucleus and cytosol." evidence="38">
    <original>R</original>
    <variation>E</variation>
    <variation>L</variation>
    <location>
        <position position="120"/>
    </location>
</feature>
<feature type="mutagenesis site" description="Abolishes activity. Impairs the ability to bind the FAD cofactor. Impairs targeting to peroxisomes and results in abnormal peroxisomal morphology. Leads to the formation of ubiquitinated protein aggregates and the induction of apoptosis." evidence="26 33">
    <original>G</original>
    <variation>R</variation>
    <location>
        <position position="183"/>
    </location>
</feature>
<feature type="mutagenesis site" description="Increases catalytic efficiency and inhibition by benzoate." evidence="39">
    <original>P</original>
    <variation>L</variation>
    <location>
        <position position="219"/>
    </location>
</feature>
<feature type="mutagenesis site" description="Decreases activity." evidence="23">
    <original>Y</original>
    <variation>F</variation>
    <location>
        <position position="224"/>
    </location>
</feature>
<feature type="mutagenesis site" description="Increases affinity for the FAD cofactor and D-serine. Decreases the cellular ratio of D-serine to L-serine." evidence="22">
    <original>R</original>
    <variation>A</variation>
    <location>
        <position position="279"/>
    </location>
</feature>
<feature type="sequence conflict" description="In Ref. 1; CAA31614." evidence="47" ref="1">
    <original>D</original>
    <variation>H</variation>
    <location>
        <position position="31"/>
    </location>
</feature>
<feature type="sequence conflict" description="In Ref. 1; CAA31614." evidence="47" ref="1">
    <original>R</original>
    <variation>A</variation>
    <location>
        <position position="279"/>
    </location>
</feature>
<feature type="strand" evidence="83">
    <location>
        <begin position="2"/>
        <end position="6"/>
    </location>
</feature>
<feature type="helix" evidence="83">
    <location>
        <begin position="10"/>
        <end position="23"/>
    </location>
</feature>
<feature type="strand" evidence="83">
    <location>
        <begin position="26"/>
        <end position="28"/>
    </location>
</feature>
<feature type="strand" evidence="83">
    <location>
        <begin position="31"/>
        <end position="37"/>
    </location>
</feature>
<feature type="helix" evidence="82">
    <location>
        <begin position="40"/>
        <end position="42"/>
    </location>
</feature>
<feature type="helix" evidence="83">
    <location>
        <begin position="44"/>
        <end position="47"/>
    </location>
</feature>
<feature type="helix" evidence="83">
    <location>
        <begin position="63"/>
        <end position="76"/>
    </location>
</feature>
<feature type="turn" evidence="83">
    <location>
        <begin position="77"/>
        <end position="80"/>
    </location>
</feature>
<feature type="helix" evidence="83">
    <location>
        <begin position="84"/>
        <end position="87"/>
    </location>
</feature>
<feature type="strand" evidence="83">
    <location>
        <begin position="89"/>
        <end position="100"/>
    </location>
</feature>
<feature type="helix" evidence="83">
    <location>
        <begin position="106"/>
        <end position="109"/>
    </location>
</feature>
<feature type="strand" evidence="83">
    <location>
        <begin position="111"/>
        <end position="116"/>
    </location>
</feature>
<feature type="helix" evidence="83">
    <location>
        <begin position="119"/>
        <end position="122"/>
    </location>
</feature>
<feature type="strand" evidence="83">
    <location>
        <begin position="129"/>
        <end position="139"/>
    </location>
</feature>
<feature type="helix" evidence="83">
    <location>
        <begin position="141"/>
        <end position="154"/>
    </location>
</feature>
<feature type="strand" evidence="83">
    <location>
        <begin position="158"/>
        <end position="161"/>
    </location>
</feature>
<feature type="helix" evidence="83">
    <location>
        <begin position="167"/>
        <end position="172"/>
    </location>
</feature>
<feature type="strand" evidence="83">
    <location>
        <begin position="176"/>
        <end position="180"/>
    </location>
</feature>
<feature type="helix" evidence="83">
    <location>
        <begin position="183"/>
        <end position="188"/>
    </location>
</feature>
<feature type="strand" evidence="83">
    <location>
        <begin position="196"/>
        <end position="206"/>
    </location>
</feature>
<feature type="strand" evidence="83">
    <location>
        <begin position="212"/>
        <end position="216"/>
    </location>
</feature>
<feature type="helix" evidence="83">
    <location>
        <begin position="219"/>
        <end position="221"/>
    </location>
</feature>
<feature type="strand" evidence="83">
    <location>
        <begin position="228"/>
        <end position="231"/>
    </location>
</feature>
<feature type="strand" evidence="83">
    <location>
        <begin position="233"/>
        <end position="239"/>
    </location>
</feature>
<feature type="helix" evidence="83">
    <location>
        <begin position="253"/>
        <end position="266"/>
    </location>
</feature>
<feature type="helix" evidence="83">
    <location>
        <begin position="268"/>
        <end position="272"/>
    </location>
</feature>
<feature type="strand" evidence="83">
    <location>
        <begin position="274"/>
        <end position="285"/>
    </location>
</feature>
<feature type="strand" evidence="83">
    <location>
        <begin position="290"/>
        <end position="298"/>
    </location>
</feature>
<feature type="strand" evidence="83">
    <location>
        <begin position="301"/>
        <end position="309"/>
    </location>
</feature>
<feature type="helix" evidence="83">
    <location>
        <begin position="312"/>
        <end position="314"/>
    </location>
</feature>
<feature type="helix" evidence="83">
    <location>
        <begin position="315"/>
        <end position="338"/>
    </location>
</feature>
<proteinExistence type="evidence at protein level"/>
<gene>
    <name type="primary">DAO</name>
    <name type="synonym">DAMOX</name>
</gene>
<sequence length="347" mass="39474">MRVVVIGAGVIGLSTALCIHERYHSVLQPLDIKVYADRFTPLTTTDVAAGLWQPYLSDPNNPQEADWSQQTFDYLLSHVHSPNAENLGLFLISGYNLFHEAIPDPSWKDTVLGFRKLTPRELDMFPDYGYGWFHTSLILEGKNYLQWLTERLTERGVKFFQRKVESFEEVAREGADVIVNCTGVWAGALQRDPLLQPGRGQIMKVDAPWMKHFILTHDPERGIYNSPYIIPGTQTVTLGGIFQLGNWSELNNIQDHNTIWEGCCRLEPTLKNARIIGERTGFRPVRPQIRLEREQLRTGPSNTEVIHNYGHGGYGLTIHWGCALEAAKLFGRILEEKKLSRMPPSHL</sequence>
<name>OXDA_HUMAN</name>
<evidence type="ECO:0000250" key="1">
    <source>
        <dbReference type="UniProtKB" id="O35078"/>
    </source>
</evidence>
<evidence type="ECO:0000250" key="2">
    <source>
        <dbReference type="UniProtKB" id="P00371"/>
    </source>
</evidence>
<evidence type="ECO:0000250" key="3">
    <source>
        <dbReference type="UniProtKB" id="P18894"/>
    </source>
</evidence>
<evidence type="ECO:0000255" key="4"/>
<evidence type="ECO:0000269" key="5">
    <source>
    </source>
</evidence>
<evidence type="ECO:0000269" key="6">
    <source>
    </source>
</evidence>
<evidence type="ECO:0000269" key="7">
    <source>
    </source>
</evidence>
<evidence type="ECO:0000269" key="8">
    <source>
    </source>
</evidence>
<evidence type="ECO:0000269" key="9">
    <source>
    </source>
</evidence>
<evidence type="ECO:0000269" key="10">
    <source>
    </source>
</evidence>
<evidence type="ECO:0000269" key="11">
    <source>
    </source>
</evidence>
<evidence type="ECO:0000269" key="12">
    <source>
    </source>
</evidence>
<evidence type="ECO:0000269" key="13">
    <source>
    </source>
</evidence>
<evidence type="ECO:0000269" key="14">
    <source>
    </source>
</evidence>
<evidence type="ECO:0000269" key="15">
    <source>
    </source>
</evidence>
<evidence type="ECO:0000269" key="16">
    <source>
    </source>
</evidence>
<evidence type="ECO:0000269" key="17">
    <source>
    </source>
</evidence>
<evidence type="ECO:0000269" key="18">
    <source>
    </source>
</evidence>
<evidence type="ECO:0000269" key="19">
    <source>
    </source>
</evidence>
<evidence type="ECO:0000269" key="20">
    <source>
    </source>
</evidence>
<evidence type="ECO:0000269" key="21">
    <source>
    </source>
</evidence>
<evidence type="ECO:0000269" key="22">
    <source>
    </source>
</evidence>
<evidence type="ECO:0000269" key="23">
    <source>
    </source>
</evidence>
<evidence type="ECO:0000269" key="24">
    <source>
    </source>
</evidence>
<evidence type="ECO:0000269" key="25">
    <source>
    </source>
</evidence>
<evidence type="ECO:0000269" key="26">
    <source>
    </source>
</evidence>
<evidence type="ECO:0000269" key="27">
    <source>
    </source>
</evidence>
<evidence type="ECO:0000269" key="28">
    <source>
    </source>
</evidence>
<evidence type="ECO:0000269" key="29">
    <source>
    </source>
</evidence>
<evidence type="ECO:0000269" key="30">
    <source>
    </source>
</evidence>
<evidence type="ECO:0000269" key="31">
    <source>
    </source>
</evidence>
<evidence type="ECO:0000269" key="32">
    <source>
    </source>
</evidence>
<evidence type="ECO:0000269" key="33">
    <source>
    </source>
</evidence>
<evidence type="ECO:0000269" key="34">
    <source>
    </source>
</evidence>
<evidence type="ECO:0000269" key="35">
    <source>
    </source>
</evidence>
<evidence type="ECO:0000269" key="36">
    <source>
    </source>
</evidence>
<evidence type="ECO:0000269" key="37">
    <source>
    </source>
</evidence>
<evidence type="ECO:0000269" key="38">
    <source>
    </source>
</evidence>
<evidence type="ECO:0000269" key="39">
    <source>
    </source>
</evidence>
<evidence type="ECO:0000269" key="40">
    <source>
    </source>
</evidence>
<evidence type="ECO:0000269" key="41">
    <source>
    </source>
</evidence>
<evidence type="ECO:0000269" key="42">
    <source>
    </source>
</evidence>
<evidence type="ECO:0000269" key="43">
    <source>
    </source>
</evidence>
<evidence type="ECO:0000269" key="44">
    <source>
    </source>
</evidence>
<evidence type="ECO:0000269" key="45">
    <source>
    </source>
</evidence>
<evidence type="ECO:0000269" key="46">
    <source>
    </source>
</evidence>
<evidence type="ECO:0000305" key="47"/>
<evidence type="ECO:0000305" key="48">
    <source>
    </source>
</evidence>
<evidence type="ECO:0000305" key="49">
    <source>
    </source>
</evidence>
<evidence type="ECO:0000305" key="50">
    <source>
    </source>
</evidence>
<evidence type="ECO:0000305" key="51">
    <source>
    </source>
</evidence>
<evidence type="ECO:0000305" key="52">
    <source>
    </source>
</evidence>
<evidence type="ECO:0000305" key="53">
    <source>
    </source>
</evidence>
<evidence type="ECO:0000312" key="54">
    <source>
        <dbReference type="EMBL" id="AAH29057.1"/>
    </source>
</evidence>
<evidence type="ECO:0000312" key="55">
    <source>
        <dbReference type="EMBL" id="AAH74770.1"/>
    </source>
</evidence>
<evidence type="ECO:0000312" key="56">
    <source>
        <dbReference type="EMBL" id="BAA20974.1"/>
    </source>
</evidence>
<evidence type="ECO:0000312" key="57">
    <source>
        <dbReference type="EMBL" id="BAG35832.1"/>
    </source>
</evidence>
<evidence type="ECO:0000312" key="58">
    <source>
        <dbReference type="EMBL" id="CAA31614.1"/>
    </source>
</evidence>
<evidence type="ECO:0000312" key="59">
    <source>
        <dbReference type="EMBL" id="EAW97837.1"/>
    </source>
</evidence>
<evidence type="ECO:0007744" key="60">
    <source>
        <dbReference type="PDB" id="2DU8"/>
    </source>
</evidence>
<evidence type="ECO:0007744" key="61">
    <source>
        <dbReference type="PDB" id="2E48"/>
    </source>
</evidence>
<evidence type="ECO:0007744" key="62">
    <source>
        <dbReference type="PDB" id="2E49"/>
    </source>
</evidence>
<evidence type="ECO:0007744" key="63">
    <source>
        <dbReference type="PDB" id="2E4A"/>
    </source>
</evidence>
<evidence type="ECO:0007744" key="64">
    <source>
        <dbReference type="PDB" id="2E82"/>
    </source>
</evidence>
<evidence type="ECO:0007744" key="65">
    <source>
        <dbReference type="PDB" id="3CUK"/>
    </source>
</evidence>
<evidence type="ECO:0007744" key="66">
    <source>
        <dbReference type="PDB" id="3G3E"/>
    </source>
</evidence>
<evidence type="ECO:0007744" key="67">
    <source>
        <dbReference type="PDB" id="3W4I"/>
    </source>
</evidence>
<evidence type="ECO:0007744" key="68">
    <source>
        <dbReference type="PDB" id="3W4J"/>
    </source>
</evidence>
<evidence type="ECO:0007744" key="69">
    <source>
        <dbReference type="PDB" id="3W4K"/>
    </source>
</evidence>
<evidence type="ECO:0007744" key="70">
    <source>
        <dbReference type="PDB" id="3ZNN"/>
    </source>
</evidence>
<evidence type="ECO:0007744" key="71">
    <source>
        <dbReference type="PDB" id="3ZNO"/>
    </source>
</evidence>
<evidence type="ECO:0007744" key="72">
    <source>
        <dbReference type="PDB" id="3ZNP"/>
    </source>
</evidence>
<evidence type="ECO:0007744" key="73">
    <source>
        <dbReference type="PDB" id="3ZNQ"/>
    </source>
</evidence>
<evidence type="ECO:0007744" key="74">
    <source>
        <dbReference type="PDB" id="4QFC"/>
    </source>
</evidence>
<evidence type="ECO:0007744" key="75">
    <source>
        <dbReference type="PDB" id="4QFD"/>
    </source>
</evidence>
<evidence type="ECO:0007744" key="76">
    <source>
        <dbReference type="PDB" id="5ZJ9"/>
    </source>
</evidence>
<evidence type="ECO:0007744" key="77">
    <source>
        <dbReference type="PDB" id="5ZJA"/>
    </source>
</evidence>
<evidence type="ECO:0007744" key="78">
    <source>
        <dbReference type="PDB" id="6KBP"/>
    </source>
</evidence>
<evidence type="ECO:0007744" key="79">
    <source>
        <dbReference type="PDB" id="7U9S"/>
    </source>
</evidence>
<evidence type="ECO:0007744" key="80">
    <source>
        <dbReference type="PDB" id="7U9U"/>
    </source>
</evidence>
<evidence type="ECO:0007744" key="81">
    <source>
        <dbReference type="PDB" id="8HY5"/>
    </source>
</evidence>
<evidence type="ECO:0007829" key="82">
    <source>
        <dbReference type="PDB" id="3G3E"/>
    </source>
</evidence>
<evidence type="ECO:0007829" key="83">
    <source>
        <dbReference type="PDB" id="7U9U"/>
    </source>
</evidence>
<organism>
    <name type="scientific">Homo sapiens</name>
    <name type="common">Human</name>
    <dbReference type="NCBI Taxonomy" id="9606"/>
    <lineage>
        <taxon>Eukaryota</taxon>
        <taxon>Metazoa</taxon>
        <taxon>Chordata</taxon>
        <taxon>Craniata</taxon>
        <taxon>Vertebrata</taxon>
        <taxon>Euteleostomi</taxon>
        <taxon>Mammalia</taxon>
        <taxon>Eutheria</taxon>
        <taxon>Euarchontoglires</taxon>
        <taxon>Primates</taxon>
        <taxon>Haplorrhini</taxon>
        <taxon>Catarrhini</taxon>
        <taxon>Hominidae</taxon>
        <taxon>Homo</taxon>
    </lineage>
</organism>
<keyword id="KW-0002">3D-structure</keyword>
<keyword id="KW-0036">Amyotrophic lateral sclerosis</keyword>
<keyword id="KW-0966">Cell projection</keyword>
<keyword id="KW-0963">Cytoplasm</keyword>
<keyword id="KW-0225">Disease variant</keyword>
<keyword id="KW-0274">FAD</keyword>
<keyword id="KW-0285">Flavoprotein</keyword>
<keyword id="KW-0523">Neurodegeneration</keyword>
<keyword id="KW-0560">Oxidoreductase</keyword>
<keyword id="KW-0576">Peroxisome</keyword>
<keyword id="KW-0597">Phosphoprotein</keyword>
<keyword id="KW-1267">Proteomics identification</keyword>
<keyword id="KW-1185">Reference proteome</keyword>
<keyword id="KW-0702">S-nitrosylation</keyword>
<keyword id="KW-1211">Schizophrenia</keyword>
<keyword id="KW-0964">Secreted</keyword>
<keyword id="KW-0770">Synapse</keyword>
<dbReference type="EC" id="1.4.3.3" evidence="6 12 18 19 23 29 34"/>
<dbReference type="EMBL" id="X13227">
    <property type="protein sequence ID" value="CAA31614.1"/>
    <property type="molecule type" value="mRNA"/>
</dbReference>
<dbReference type="EMBL" id="AK312995">
    <property type="protein sequence ID" value="BAG35832.1"/>
    <property type="molecule type" value="mRNA"/>
</dbReference>
<dbReference type="EMBL" id="CH471054">
    <property type="protein sequence ID" value="EAW97837.1"/>
    <property type="molecule type" value="Genomic_DNA"/>
</dbReference>
<dbReference type="EMBL" id="BC029057">
    <property type="protein sequence ID" value="AAH29057.1"/>
    <property type="molecule type" value="mRNA"/>
</dbReference>
<dbReference type="EMBL" id="BC074770">
    <property type="protein sequence ID" value="AAH74770.1"/>
    <property type="molecule type" value="mRNA"/>
</dbReference>
<dbReference type="EMBL" id="D11370">
    <property type="protein sequence ID" value="BAA20974.1"/>
    <property type="molecule type" value="Genomic_DNA"/>
</dbReference>
<dbReference type="CCDS" id="CCDS9122.1"/>
<dbReference type="PIR" id="S01340">
    <property type="entry name" value="S01340"/>
</dbReference>
<dbReference type="RefSeq" id="NP_001400563.1">
    <property type="nucleotide sequence ID" value="NM_001413634.1"/>
</dbReference>
<dbReference type="RefSeq" id="NP_001908.3">
    <property type="nucleotide sequence ID" value="NM_001917.4"/>
</dbReference>
<dbReference type="RefSeq" id="XP_011536306.1">
    <property type="nucleotide sequence ID" value="XM_011538004.3"/>
</dbReference>
<dbReference type="RefSeq" id="XP_011536307.1">
    <property type="nucleotide sequence ID" value="XM_011538005.2"/>
</dbReference>
<dbReference type="RefSeq" id="XP_054227282.1">
    <property type="nucleotide sequence ID" value="XM_054371307.1"/>
</dbReference>
<dbReference type="PDB" id="2DU8">
    <property type="method" value="X-ray"/>
    <property type="resolution" value="2.50 A"/>
    <property type="chains" value="A/B/G/J=1-347"/>
</dbReference>
<dbReference type="PDB" id="2E48">
    <property type="method" value="X-ray"/>
    <property type="resolution" value="2.90 A"/>
    <property type="chains" value="A/B/C/D=1-347"/>
</dbReference>
<dbReference type="PDB" id="2E49">
    <property type="method" value="X-ray"/>
    <property type="resolution" value="3.20 A"/>
    <property type="chains" value="A/B/C/D=1-347"/>
</dbReference>
<dbReference type="PDB" id="2E4A">
    <property type="method" value="X-ray"/>
    <property type="resolution" value="2.60 A"/>
    <property type="chains" value="A/B/C/D=1-347"/>
</dbReference>
<dbReference type="PDB" id="2E82">
    <property type="method" value="X-ray"/>
    <property type="resolution" value="2.70 A"/>
    <property type="chains" value="A/B/C/D=1-347"/>
</dbReference>
<dbReference type="PDB" id="3CUK">
    <property type="method" value="X-ray"/>
    <property type="resolution" value="2.49 A"/>
    <property type="chains" value="A/B/C/D=1-347"/>
</dbReference>
<dbReference type="PDB" id="3G3E">
    <property type="method" value="X-ray"/>
    <property type="resolution" value="2.20 A"/>
    <property type="chains" value="A/B/C/D=1-347"/>
</dbReference>
<dbReference type="PDB" id="3W4I">
    <property type="method" value="X-ray"/>
    <property type="resolution" value="2.50 A"/>
    <property type="chains" value="A/B/C/D=1-347"/>
</dbReference>
<dbReference type="PDB" id="3W4J">
    <property type="method" value="X-ray"/>
    <property type="resolution" value="2.74 A"/>
    <property type="chains" value="A/B/C/D=1-347"/>
</dbReference>
<dbReference type="PDB" id="3W4K">
    <property type="method" value="X-ray"/>
    <property type="resolution" value="2.86 A"/>
    <property type="chains" value="A/B/C/D=1-347"/>
</dbReference>
<dbReference type="PDB" id="3ZNN">
    <property type="method" value="X-ray"/>
    <property type="resolution" value="1.90 A"/>
    <property type="chains" value="A/B=1-347"/>
</dbReference>
<dbReference type="PDB" id="3ZNO">
    <property type="method" value="X-ray"/>
    <property type="resolution" value="2.30 A"/>
    <property type="chains" value="A/B=1-347"/>
</dbReference>
<dbReference type="PDB" id="3ZNP">
    <property type="method" value="X-ray"/>
    <property type="resolution" value="2.40 A"/>
    <property type="chains" value="A/B=1-347"/>
</dbReference>
<dbReference type="PDB" id="3ZNQ">
    <property type="method" value="X-ray"/>
    <property type="resolution" value="2.75 A"/>
    <property type="chains" value="A/B=1-347"/>
</dbReference>
<dbReference type="PDB" id="4QFC">
    <property type="method" value="X-ray"/>
    <property type="resolution" value="2.40 A"/>
    <property type="chains" value="A/B=1-347"/>
</dbReference>
<dbReference type="PDB" id="4QFD">
    <property type="method" value="X-ray"/>
    <property type="resolution" value="2.85 A"/>
    <property type="chains" value="A/B=1-347"/>
</dbReference>
<dbReference type="PDB" id="5ZJ9">
    <property type="method" value="X-ray"/>
    <property type="resolution" value="2.60 A"/>
    <property type="chains" value="A/B/C/D=1-340"/>
</dbReference>
<dbReference type="PDB" id="5ZJA">
    <property type="method" value="X-ray"/>
    <property type="resolution" value="2.60 A"/>
    <property type="chains" value="A/B/C/D=1-340"/>
</dbReference>
<dbReference type="PDB" id="6KBP">
    <property type="method" value="X-ray"/>
    <property type="resolution" value="2.25 A"/>
    <property type="chains" value="A/B/C/D=1-338"/>
</dbReference>
<dbReference type="PDB" id="7U9S">
    <property type="method" value="X-ray"/>
    <property type="resolution" value="2.10 A"/>
    <property type="chains" value="A/B=1-347"/>
</dbReference>
<dbReference type="PDB" id="7U9U">
    <property type="method" value="X-ray"/>
    <property type="resolution" value="1.66 A"/>
    <property type="chains" value="A/B=1-347"/>
</dbReference>
<dbReference type="PDB" id="8HY5">
    <property type="method" value="X-ray"/>
    <property type="resolution" value="2.10 A"/>
    <property type="chains" value="A/B=1-347"/>
</dbReference>
<dbReference type="PDBsum" id="2DU8"/>
<dbReference type="PDBsum" id="2E48"/>
<dbReference type="PDBsum" id="2E49"/>
<dbReference type="PDBsum" id="2E4A"/>
<dbReference type="PDBsum" id="2E82"/>
<dbReference type="PDBsum" id="3CUK"/>
<dbReference type="PDBsum" id="3G3E"/>
<dbReference type="PDBsum" id="3W4I"/>
<dbReference type="PDBsum" id="3W4J"/>
<dbReference type="PDBsum" id="3W4K"/>
<dbReference type="PDBsum" id="3ZNN"/>
<dbReference type="PDBsum" id="3ZNO"/>
<dbReference type="PDBsum" id="3ZNP"/>
<dbReference type="PDBsum" id="3ZNQ"/>
<dbReference type="PDBsum" id="4QFC"/>
<dbReference type="PDBsum" id="4QFD"/>
<dbReference type="PDBsum" id="5ZJ9"/>
<dbReference type="PDBsum" id="5ZJA"/>
<dbReference type="PDBsum" id="6KBP"/>
<dbReference type="PDBsum" id="7U9S"/>
<dbReference type="PDBsum" id="7U9U"/>
<dbReference type="PDBsum" id="8HY5"/>
<dbReference type="SMR" id="P14920"/>
<dbReference type="BioGRID" id="107980">
    <property type="interactions" value="11"/>
</dbReference>
<dbReference type="FunCoup" id="P14920">
    <property type="interactions" value="352"/>
</dbReference>
<dbReference type="IntAct" id="P14920">
    <property type="interactions" value="7"/>
</dbReference>
<dbReference type="STRING" id="9606.ENSP00000228476"/>
<dbReference type="BindingDB" id="P14920"/>
<dbReference type="ChEMBL" id="CHEMBL5485"/>
<dbReference type="DrugBank" id="DB07979">
    <property type="generic name" value="(2E)-3-(3,4-DIHYDROXYPHENYL)-2-IMINOPROPANOIC ACID"/>
</dbReference>
<dbReference type="DrugBank" id="DB02838">
    <property type="generic name" value="3,4-Dihydro-2h-Pyrrolium-5-Carboxylate"/>
</dbReference>
<dbReference type="DrugBank" id="DB04166">
    <property type="generic name" value="Anthranilic acid"/>
</dbReference>
<dbReference type="DrugBank" id="DB03793">
    <property type="generic name" value="Benzoic acid"/>
</dbReference>
<dbReference type="DrugBank" id="DB03225">
    <property type="generic name" value="D-Tryptophan"/>
</dbReference>
<dbReference type="DrugBank" id="DB03147">
    <property type="generic name" value="Flavin adenine dinucleotide"/>
</dbReference>
<dbReference type="DrugBank" id="DB03531">
    <property type="generic name" value="Flavin-adenine dinucleotide-N5-isobutyl ketone"/>
</dbReference>
<dbReference type="DrugBank" id="DB02988">
    <property type="generic name" value="Imino-Tryptophan"/>
</dbReference>
<dbReference type="DrugBank" id="DB16067">
    <property type="generic name" value="Luvadaxistat"/>
</dbReference>
<dbReference type="DrugCentral" id="P14920"/>
<dbReference type="iPTMnet" id="P14920"/>
<dbReference type="PhosphoSitePlus" id="P14920"/>
<dbReference type="BioMuta" id="DAO"/>
<dbReference type="DMDM" id="25453448"/>
<dbReference type="jPOST" id="P14920"/>
<dbReference type="MassIVE" id="P14920"/>
<dbReference type="PaxDb" id="9606-ENSP00000228476"/>
<dbReference type="PeptideAtlas" id="P14920"/>
<dbReference type="ProteomicsDB" id="53094"/>
<dbReference type="TopDownProteomics" id="P14920"/>
<dbReference type="Antibodypedia" id="30788">
    <property type="antibodies" value="296 antibodies from 30 providers"/>
</dbReference>
<dbReference type="DNASU" id="1610"/>
<dbReference type="Ensembl" id="ENST00000228476.8">
    <property type="protein sequence ID" value="ENSP00000228476.3"/>
    <property type="gene ID" value="ENSG00000110887.8"/>
</dbReference>
<dbReference type="GeneID" id="1610"/>
<dbReference type="KEGG" id="hsa:1610"/>
<dbReference type="MANE-Select" id="ENST00000228476.8">
    <property type="protein sequence ID" value="ENSP00000228476.3"/>
    <property type="RefSeq nucleotide sequence ID" value="NM_001917.5"/>
    <property type="RefSeq protein sequence ID" value="NP_001908.3"/>
</dbReference>
<dbReference type="UCSC" id="uc001tnr.5">
    <property type="organism name" value="human"/>
</dbReference>
<dbReference type="AGR" id="HGNC:2671"/>
<dbReference type="CTD" id="1610"/>
<dbReference type="DisGeNET" id="1610"/>
<dbReference type="GeneCards" id="DAO"/>
<dbReference type="HGNC" id="HGNC:2671">
    <property type="gene designation" value="DAO"/>
</dbReference>
<dbReference type="HPA" id="ENSG00000110887">
    <property type="expression patterns" value="Group enriched (brain, kidney, liver)"/>
</dbReference>
<dbReference type="MalaCards" id="DAO"/>
<dbReference type="MIM" id="105400">
    <property type="type" value="phenotype"/>
</dbReference>
<dbReference type="MIM" id="124050">
    <property type="type" value="gene"/>
</dbReference>
<dbReference type="MIM" id="181500">
    <property type="type" value="phenotype"/>
</dbReference>
<dbReference type="neXtProt" id="NX_P14920"/>
<dbReference type="OpenTargets" id="ENSG00000110887"/>
<dbReference type="Orphanet" id="803">
    <property type="disease" value="Amyotrophic lateral sclerosis"/>
</dbReference>
<dbReference type="PharmGKB" id="PA27139"/>
<dbReference type="VEuPathDB" id="HostDB:ENSG00000110887"/>
<dbReference type="eggNOG" id="KOG3923">
    <property type="taxonomic scope" value="Eukaryota"/>
</dbReference>
<dbReference type="GeneTree" id="ENSGT00390000018635"/>
<dbReference type="InParanoid" id="P14920"/>
<dbReference type="OMA" id="LWWPYRI"/>
<dbReference type="OrthoDB" id="2015447at2759"/>
<dbReference type="PAN-GO" id="P14920">
    <property type="GO annotations" value="5 GO annotations based on evolutionary models"/>
</dbReference>
<dbReference type="PhylomeDB" id="P14920"/>
<dbReference type="TreeFam" id="TF313887"/>
<dbReference type="BioCyc" id="MetaCyc:HS03351-MONOMER"/>
<dbReference type="BRENDA" id="1.4.3.3">
    <property type="organism ID" value="2681"/>
</dbReference>
<dbReference type="PathwayCommons" id="P14920"/>
<dbReference type="Reactome" id="R-HSA-389661">
    <property type="pathway name" value="Glyoxylate metabolism and glycine degradation"/>
</dbReference>
<dbReference type="Reactome" id="R-HSA-9033241">
    <property type="pathway name" value="Peroxisomal protein import"/>
</dbReference>
<dbReference type="SABIO-RK" id="P14920"/>
<dbReference type="SignaLink" id="P14920"/>
<dbReference type="BioGRID-ORCS" id="1610">
    <property type="hits" value="13 hits in 1151 CRISPR screens"/>
</dbReference>
<dbReference type="ChiTaRS" id="DAO">
    <property type="organism name" value="human"/>
</dbReference>
<dbReference type="EvolutionaryTrace" id="P14920"/>
<dbReference type="GenomeRNAi" id="1610"/>
<dbReference type="Pharos" id="P14920">
    <property type="development level" value="Tchem"/>
</dbReference>
<dbReference type="PRO" id="PR:P14920"/>
<dbReference type="Proteomes" id="UP000005640">
    <property type="component" value="Chromosome 12"/>
</dbReference>
<dbReference type="RNAct" id="P14920">
    <property type="molecule type" value="protein"/>
</dbReference>
<dbReference type="Bgee" id="ENSG00000110887">
    <property type="expression patterns" value="Expressed in right lobe of liver and 97 other cell types or tissues"/>
</dbReference>
<dbReference type="ExpressionAtlas" id="P14920">
    <property type="expression patterns" value="baseline and differential"/>
</dbReference>
<dbReference type="GO" id="GO:0042995">
    <property type="term" value="C:cell projection"/>
    <property type="evidence" value="ECO:0007669"/>
    <property type="project" value="UniProtKB-KW"/>
</dbReference>
<dbReference type="GO" id="GO:0005737">
    <property type="term" value="C:cytoplasm"/>
    <property type="evidence" value="ECO:0000314"/>
    <property type="project" value="UniProtKB"/>
</dbReference>
<dbReference type="GO" id="GO:0005829">
    <property type="term" value="C:cytosol"/>
    <property type="evidence" value="ECO:0000314"/>
    <property type="project" value="UniProtKB"/>
</dbReference>
<dbReference type="GO" id="GO:0005615">
    <property type="term" value="C:extracellular space"/>
    <property type="evidence" value="ECO:0007669"/>
    <property type="project" value="Ensembl"/>
</dbReference>
<dbReference type="GO" id="GO:0005782">
    <property type="term" value="C:peroxisomal matrix"/>
    <property type="evidence" value="ECO:0000314"/>
    <property type="project" value="UniProtKB"/>
</dbReference>
<dbReference type="GO" id="GO:0048786">
    <property type="term" value="C:presynaptic active zone"/>
    <property type="evidence" value="ECO:0000250"/>
    <property type="project" value="UniProtKB"/>
</dbReference>
<dbReference type="GO" id="GO:0008718">
    <property type="term" value="F:D-amino-acid dehydrogenase activity"/>
    <property type="evidence" value="ECO:0007669"/>
    <property type="project" value="Ensembl"/>
</dbReference>
<dbReference type="GO" id="GO:0003884">
    <property type="term" value="F:D-amino-acid oxidase activity"/>
    <property type="evidence" value="ECO:0000314"/>
    <property type="project" value="UniProtKB"/>
</dbReference>
<dbReference type="GO" id="GO:0071949">
    <property type="term" value="F:FAD binding"/>
    <property type="evidence" value="ECO:0000314"/>
    <property type="project" value="UniProtKB"/>
</dbReference>
<dbReference type="GO" id="GO:0043799">
    <property type="term" value="F:glycine oxidase activity"/>
    <property type="evidence" value="ECO:0007669"/>
    <property type="project" value="RHEA"/>
</dbReference>
<dbReference type="GO" id="GO:0042802">
    <property type="term" value="F:identical protein binding"/>
    <property type="evidence" value="ECO:0000353"/>
    <property type="project" value="UniProtKB"/>
</dbReference>
<dbReference type="GO" id="GO:0055130">
    <property type="term" value="P:D-alanine catabolic process"/>
    <property type="evidence" value="ECO:0000314"/>
    <property type="project" value="UniProtKB"/>
</dbReference>
<dbReference type="GO" id="GO:0019478">
    <property type="term" value="P:D-amino acid catabolic process"/>
    <property type="evidence" value="ECO:0000314"/>
    <property type="project" value="UniProtKB"/>
</dbReference>
<dbReference type="GO" id="GO:0036088">
    <property type="term" value="P:D-serine catabolic process"/>
    <property type="evidence" value="ECO:0000314"/>
    <property type="project" value="UniProtKB"/>
</dbReference>
<dbReference type="GO" id="GO:0070178">
    <property type="term" value="P:D-serine metabolic process"/>
    <property type="evidence" value="ECO:0000314"/>
    <property type="project" value="UniProtKB"/>
</dbReference>
<dbReference type="GO" id="GO:0007586">
    <property type="term" value="P:digestion"/>
    <property type="evidence" value="ECO:0000250"/>
    <property type="project" value="UniProtKB"/>
</dbReference>
<dbReference type="GO" id="GO:0042416">
    <property type="term" value="P:dopamine biosynthetic process"/>
    <property type="evidence" value="ECO:0000314"/>
    <property type="project" value="UniProtKB"/>
</dbReference>
<dbReference type="GO" id="GO:0006551">
    <property type="term" value="P:L-leucine metabolic process"/>
    <property type="evidence" value="ECO:0007669"/>
    <property type="project" value="Ensembl"/>
</dbReference>
<dbReference type="GO" id="GO:0070945">
    <property type="term" value="P:neutrophil-mediated killing of gram-negative bacterium"/>
    <property type="evidence" value="ECO:0000250"/>
    <property type="project" value="UniProtKB"/>
</dbReference>
<dbReference type="GO" id="GO:0006562">
    <property type="term" value="P:proline catabolic process"/>
    <property type="evidence" value="ECO:0000314"/>
    <property type="project" value="UniProtKB"/>
</dbReference>
<dbReference type="FunFam" id="3.40.50.720:FF:000641">
    <property type="entry name" value="D-amino acid oxidase"/>
    <property type="match status" value="1"/>
</dbReference>
<dbReference type="FunFam" id="3.30.9.10:FF:000004">
    <property type="entry name" value="D-amino-acid oxidase"/>
    <property type="match status" value="1"/>
</dbReference>
<dbReference type="Gene3D" id="3.30.9.10">
    <property type="entry name" value="D-Amino Acid Oxidase, subunit A, domain 2"/>
    <property type="match status" value="1"/>
</dbReference>
<dbReference type="Gene3D" id="3.40.50.720">
    <property type="entry name" value="NAD(P)-binding Rossmann-like Domain"/>
    <property type="match status" value="1"/>
</dbReference>
<dbReference type="InterPro" id="IPR006181">
    <property type="entry name" value="D-amino_acid_oxidase_CS"/>
</dbReference>
<dbReference type="InterPro" id="IPR023209">
    <property type="entry name" value="DAO"/>
</dbReference>
<dbReference type="InterPro" id="IPR006076">
    <property type="entry name" value="FAD-dep_OxRdtase"/>
</dbReference>
<dbReference type="PANTHER" id="PTHR11530">
    <property type="entry name" value="D-AMINO ACID OXIDASE"/>
    <property type="match status" value="1"/>
</dbReference>
<dbReference type="PANTHER" id="PTHR11530:SF15">
    <property type="entry name" value="D-AMINO-ACID OXIDASE"/>
    <property type="match status" value="1"/>
</dbReference>
<dbReference type="Pfam" id="PF01266">
    <property type="entry name" value="DAO"/>
    <property type="match status" value="1"/>
</dbReference>
<dbReference type="PIRSF" id="PIRSF000189">
    <property type="entry name" value="D-aa_oxidase"/>
    <property type="match status" value="1"/>
</dbReference>
<dbReference type="SUPFAM" id="SSF54373">
    <property type="entry name" value="FAD-linked reductases, C-terminal domain"/>
    <property type="match status" value="1"/>
</dbReference>
<dbReference type="SUPFAM" id="SSF51971">
    <property type="entry name" value="Nucleotide-binding domain"/>
    <property type="match status" value="1"/>
</dbReference>
<dbReference type="PROSITE" id="PS00677">
    <property type="entry name" value="DAO"/>
    <property type="match status" value="1"/>
</dbReference>
<reference evidence="58" key="1">
    <citation type="journal article" date="1988" name="FEBS Lett.">
        <title>Molecular cloning and sequence analysis of cDNA encoding human kidney D-amino acid oxidase.</title>
        <authorList>
            <person name="Momoi K."/>
            <person name="Fukui K."/>
            <person name="Watanabe F."/>
            <person name="Miyake Y."/>
        </authorList>
    </citation>
    <scope>NUCLEOTIDE SEQUENCE [MRNA]</scope>
    <source>
        <tissue>Kidney</tissue>
    </source>
</reference>
<reference key="2">
    <citation type="submission" date="1990-09" db="EMBL/GenBank/DDBJ databases">
        <authorList>
            <person name="Momoi K."/>
        </authorList>
    </citation>
    <scope>SEQUENCE REVISION</scope>
</reference>
<reference evidence="57" key="3">
    <citation type="journal article" date="2004" name="Nat. Genet.">
        <title>Complete sequencing and characterization of 21,243 full-length human cDNAs.</title>
        <authorList>
            <person name="Ota T."/>
            <person name="Suzuki Y."/>
            <person name="Nishikawa T."/>
            <person name="Otsuki T."/>
            <person name="Sugiyama T."/>
            <person name="Irie R."/>
            <person name="Wakamatsu A."/>
            <person name="Hayashi K."/>
            <person name="Sato H."/>
            <person name="Nagai K."/>
            <person name="Kimura K."/>
            <person name="Makita H."/>
            <person name="Sekine M."/>
            <person name="Obayashi M."/>
            <person name="Nishi T."/>
            <person name="Shibahara T."/>
            <person name="Tanaka T."/>
            <person name="Ishii S."/>
            <person name="Yamamoto J."/>
            <person name="Saito K."/>
            <person name="Kawai Y."/>
            <person name="Isono Y."/>
            <person name="Nakamura Y."/>
            <person name="Nagahari K."/>
            <person name="Murakami K."/>
            <person name="Yasuda T."/>
            <person name="Iwayanagi T."/>
            <person name="Wagatsuma M."/>
            <person name="Shiratori A."/>
            <person name="Sudo H."/>
            <person name="Hosoiri T."/>
            <person name="Kaku Y."/>
            <person name="Kodaira H."/>
            <person name="Kondo H."/>
            <person name="Sugawara M."/>
            <person name="Takahashi M."/>
            <person name="Kanda K."/>
            <person name="Yokoi T."/>
            <person name="Furuya T."/>
            <person name="Kikkawa E."/>
            <person name="Omura Y."/>
            <person name="Abe K."/>
            <person name="Kamihara K."/>
            <person name="Katsuta N."/>
            <person name="Sato K."/>
            <person name="Tanikawa M."/>
            <person name="Yamazaki M."/>
            <person name="Ninomiya K."/>
            <person name="Ishibashi T."/>
            <person name="Yamashita H."/>
            <person name="Murakawa K."/>
            <person name="Fujimori K."/>
            <person name="Tanai H."/>
            <person name="Kimata M."/>
            <person name="Watanabe M."/>
            <person name="Hiraoka S."/>
            <person name="Chiba Y."/>
            <person name="Ishida S."/>
            <person name="Ono Y."/>
            <person name="Takiguchi S."/>
            <person name="Watanabe S."/>
            <person name="Yosida M."/>
            <person name="Hotuta T."/>
            <person name="Kusano J."/>
            <person name="Kanehori K."/>
            <person name="Takahashi-Fujii A."/>
            <person name="Hara H."/>
            <person name="Tanase T.-O."/>
            <person name="Nomura Y."/>
            <person name="Togiya S."/>
            <person name="Komai F."/>
            <person name="Hara R."/>
            <person name="Takeuchi K."/>
            <person name="Arita M."/>
            <person name="Imose N."/>
            <person name="Musashino K."/>
            <person name="Yuuki H."/>
            <person name="Oshima A."/>
            <person name="Sasaki N."/>
            <person name="Aotsuka S."/>
            <person name="Yoshikawa Y."/>
            <person name="Matsunawa H."/>
            <person name="Ichihara T."/>
            <person name="Shiohata N."/>
            <person name="Sano S."/>
            <person name="Moriya S."/>
            <person name="Momiyama H."/>
            <person name="Satoh N."/>
            <person name="Takami S."/>
            <person name="Terashima Y."/>
            <person name="Suzuki O."/>
            <person name="Nakagawa S."/>
            <person name="Senoh A."/>
            <person name="Mizoguchi H."/>
            <person name="Goto Y."/>
            <person name="Shimizu F."/>
            <person name="Wakebe H."/>
            <person name="Hishigaki H."/>
            <person name="Watanabe T."/>
            <person name="Sugiyama A."/>
            <person name="Takemoto M."/>
            <person name="Kawakami B."/>
            <person name="Yamazaki M."/>
            <person name="Watanabe K."/>
            <person name="Kumagai A."/>
            <person name="Itakura S."/>
            <person name="Fukuzumi Y."/>
            <person name="Fujimori Y."/>
            <person name="Komiyama M."/>
            <person name="Tashiro H."/>
            <person name="Tanigami A."/>
            <person name="Fujiwara T."/>
            <person name="Ono T."/>
            <person name="Yamada K."/>
            <person name="Fujii Y."/>
            <person name="Ozaki K."/>
            <person name="Hirao M."/>
            <person name="Ohmori Y."/>
            <person name="Kawabata A."/>
            <person name="Hikiji T."/>
            <person name="Kobatake N."/>
            <person name="Inagaki H."/>
            <person name="Ikema Y."/>
            <person name="Okamoto S."/>
            <person name="Okitani R."/>
            <person name="Kawakami T."/>
            <person name="Noguchi S."/>
            <person name="Itoh T."/>
            <person name="Shigeta K."/>
            <person name="Senba T."/>
            <person name="Matsumura K."/>
            <person name="Nakajima Y."/>
            <person name="Mizuno T."/>
            <person name="Morinaga M."/>
            <person name="Sasaki M."/>
            <person name="Togashi T."/>
            <person name="Oyama M."/>
            <person name="Hata H."/>
            <person name="Watanabe M."/>
            <person name="Komatsu T."/>
            <person name="Mizushima-Sugano J."/>
            <person name="Satoh T."/>
            <person name="Shirai Y."/>
            <person name="Takahashi Y."/>
            <person name="Nakagawa K."/>
            <person name="Okumura K."/>
            <person name="Nagase T."/>
            <person name="Nomura N."/>
            <person name="Kikuchi H."/>
            <person name="Masuho Y."/>
            <person name="Yamashita R."/>
            <person name="Nakai K."/>
            <person name="Yada T."/>
            <person name="Nakamura Y."/>
            <person name="Ohara O."/>
            <person name="Isogai T."/>
            <person name="Sugano S."/>
        </authorList>
    </citation>
    <scope>NUCLEOTIDE SEQUENCE [LARGE SCALE MRNA]</scope>
    <source>
        <tissue>Cerebellum</tissue>
    </source>
</reference>
<reference evidence="59" key="4">
    <citation type="submission" date="2005-07" db="EMBL/GenBank/DDBJ databases">
        <authorList>
            <person name="Mural R.J."/>
            <person name="Istrail S."/>
            <person name="Sutton G.G."/>
            <person name="Florea L."/>
            <person name="Halpern A.L."/>
            <person name="Mobarry C.M."/>
            <person name="Lippert R."/>
            <person name="Walenz B."/>
            <person name="Shatkay H."/>
            <person name="Dew I."/>
            <person name="Miller J.R."/>
            <person name="Flanigan M.J."/>
            <person name="Edwards N.J."/>
            <person name="Bolanos R."/>
            <person name="Fasulo D."/>
            <person name="Halldorsson B.V."/>
            <person name="Hannenhalli S."/>
            <person name="Turner R."/>
            <person name="Yooseph S."/>
            <person name="Lu F."/>
            <person name="Nusskern D.R."/>
            <person name="Shue B.C."/>
            <person name="Zheng X.H."/>
            <person name="Zhong F."/>
            <person name="Delcher A.L."/>
            <person name="Huson D.H."/>
            <person name="Kravitz S.A."/>
            <person name="Mouchard L."/>
            <person name="Reinert K."/>
            <person name="Remington K.A."/>
            <person name="Clark A.G."/>
            <person name="Waterman M.S."/>
            <person name="Eichler E.E."/>
            <person name="Adams M.D."/>
            <person name="Hunkapiller M.W."/>
            <person name="Myers E.W."/>
            <person name="Venter J.C."/>
        </authorList>
    </citation>
    <scope>NUCLEOTIDE SEQUENCE [LARGE SCALE GENOMIC DNA]</scope>
</reference>
<reference evidence="54 55" key="5">
    <citation type="journal article" date="2004" name="Genome Res.">
        <title>The status, quality, and expansion of the NIH full-length cDNA project: the Mammalian Gene Collection (MGC).</title>
        <authorList>
            <consortium name="The MGC Project Team"/>
        </authorList>
    </citation>
    <scope>NUCLEOTIDE SEQUENCE [LARGE SCALE MRNA]</scope>
    <source>
        <tissue>Brain</tissue>
        <tissue>Colon</tissue>
        <tissue>Kidney</tissue>
    </source>
</reference>
<reference evidence="56" key="6">
    <citation type="journal article" date="1992" name="J. Biol. Chem.">
        <title>Molecular cloning and chromosomal localization of a human gene encoding D-amino-acid oxidase.</title>
        <authorList>
            <person name="Fukui K."/>
            <person name="Miyake Y."/>
        </authorList>
    </citation>
    <scope>NUCLEOTIDE SEQUENCE [GENOMIC DNA] OF 1-65</scope>
</reference>
<reference key="7">
    <citation type="journal article" date="2002" name="Proc. Natl. Acad. Sci. U.S.A.">
        <title>Genetic and physiological data implicating the new human gene G72 and the gene for D-amino acid oxidase in schizophrenia.</title>
        <authorList>
            <person name="Chumakov I."/>
            <person name="Blumenfeld M."/>
            <person name="Guerassimenko O."/>
            <person name="Cavarec L."/>
            <person name="Palicio M."/>
            <person name="Abderrahim H."/>
            <person name="Bougueleret L."/>
            <person name="Barry C."/>
            <person name="Tanaka H."/>
            <person name="La Rosa P."/>
            <person name="Puech A."/>
            <person name="Tahri N."/>
            <person name="Cohen-Akenine A."/>
            <person name="Delabrosse S."/>
            <person name="Lissarrague S."/>
            <person name="Picard F.-P."/>
            <person name="Maurice K."/>
            <person name="Essioux L."/>
            <person name="Millasseau P."/>
            <person name="Grel P."/>
            <person name="Debailleul V."/>
            <person name="Simon A.-M."/>
            <person name="Caterina D."/>
            <person name="Dufaure I."/>
            <person name="Malekzadeh K."/>
            <person name="Belova M."/>
            <person name="Luan J.-J."/>
            <person name="Bouillot M."/>
            <person name="Sambucy J.-L."/>
            <person name="Primas G."/>
            <person name="Saumier M."/>
            <person name="Boubkiri N."/>
            <person name="Martin-Saumier S."/>
            <person name="Nasroune M."/>
            <person name="Peixoto H."/>
            <person name="Delaye A."/>
            <person name="Pinchot V."/>
            <person name="Bastucci M."/>
            <person name="Guillou S."/>
            <person name="Chevillon M."/>
            <person name="Sainz-Fuertes R."/>
            <person name="Meguenni S."/>
            <person name="Aurich-Costa J."/>
            <person name="Cherif D."/>
            <person name="Gimalac A."/>
            <person name="Van Duijn C."/>
            <person name="Gauvreau D."/>
            <person name="Ouellette G."/>
            <person name="Fortier I."/>
            <person name="Raelson J."/>
            <person name="Sherbatich T."/>
            <person name="Riazanskay N."/>
            <person name="Rogaev E."/>
            <person name="Raeymaekers P."/>
            <person name="Aerssens J."/>
            <person name="Konings F."/>
            <person name="Luyten W."/>
            <person name="Macciardi F."/>
            <person name="Sham P.C."/>
            <person name="Straub R.E."/>
            <person name="Weinberger D.R."/>
            <person name="Cohen N."/>
            <person name="Cohen D."/>
        </authorList>
    </citation>
    <scope>INVOLVEMENT IN SCZD</scope>
    <scope>INTERACTION WITH DAOA</scope>
</reference>
<reference key="8">
    <citation type="journal article" date="2002" name="Proc. Natl. Acad. Sci. U.S.A.">
        <authorList>
            <person name="Chumakov I."/>
            <person name="Blumenfeld M."/>
            <person name="Guerassimenko O."/>
            <person name="Cavarec L."/>
            <person name="Palicio M."/>
            <person name="Abderrahim H."/>
            <person name="Bougueleret L."/>
            <person name="Barry C."/>
            <person name="Tanaka H."/>
            <person name="La Rosa P."/>
            <person name="Puech A."/>
            <person name="Tahri N."/>
            <person name="Cohen-Akenine A."/>
            <person name="Delabrosse S."/>
            <person name="Lissarrague S."/>
            <person name="Picard F.-P."/>
            <person name="Maurice K."/>
            <person name="Essioux L."/>
            <person name="Millasseau P."/>
            <person name="Grel P."/>
            <person name="Debailleul V."/>
            <person name="Simon A.-M."/>
            <person name="Caterina D."/>
            <person name="Dufaure I."/>
            <person name="Malekzadeh K."/>
            <person name="Belova M."/>
            <person name="Luan J.-J."/>
            <person name="Bouillot M."/>
            <person name="Sambucy J.-L."/>
            <person name="Primas G."/>
            <person name="Saumier M."/>
            <person name="Boubkiri N."/>
            <person name="Martin-Saumier S."/>
            <person name="Nasroune M."/>
            <person name="Peixoto H."/>
            <person name="Delaye A."/>
            <person name="Pinchot V."/>
            <person name="Bastucci M."/>
            <person name="Guillou S."/>
            <person name="Chevillon M."/>
            <person name="Sainz-Fuertes R."/>
            <person name="Meguenni S."/>
            <person name="Aurich-Costa J."/>
            <person name="Cherif D."/>
            <person name="Gimalac A."/>
            <person name="Van Duijn C."/>
            <person name="Gauvreau D."/>
            <person name="Ouellette G."/>
            <person name="Fortier I."/>
            <person name="Raelson J."/>
            <person name="Sherbatich T."/>
            <person name="Riazanskay N."/>
            <person name="Rogaev E."/>
            <person name="Raeymaekers P."/>
            <person name="Aerssens J."/>
            <person name="Konings F."/>
            <person name="Luyten W."/>
            <person name="Macciardi F."/>
            <person name="Sham P.C."/>
            <person name="Straub R.E."/>
            <person name="Weinberger D.R."/>
            <person name="Cohen N."/>
            <person name="Cohen D."/>
        </authorList>
    </citation>
    <scope>ERRATUM OF PUBMED:12364586</scope>
</reference>
<reference key="9">
    <citation type="journal article" date="2006" name="FEBS Lett.">
        <title>Characterization of human D-amino acid oxidase.</title>
        <authorList>
            <person name="Molla G."/>
            <person name="Sacchi S."/>
            <person name="Bernasconi M."/>
            <person name="Pilone M.S."/>
            <person name="Fukui K."/>
            <person name="Polegioni L."/>
        </authorList>
    </citation>
    <scope>FUNCTION</scope>
    <scope>CATALYTIC ACTIVITY</scope>
    <scope>COFACTOR</scope>
    <scope>BIOPHYSICOCHEMICAL PROPERTIES</scope>
    <scope>SUBUNIT</scope>
</reference>
<reference key="10">
    <citation type="journal article" date="2007" name="Eur. J. Neurosci.">
        <title>d-Amino acid oxidase and serine racemase in human brain: normal distribution and altered expression in schizophrenia.</title>
        <authorList>
            <person name="Verrall L."/>
            <person name="Walker M."/>
            <person name="Rawlings N."/>
            <person name="Benzel I."/>
            <person name="Kew J.N."/>
            <person name="Harrison P.J."/>
            <person name="Burnet P.W."/>
        </authorList>
    </citation>
    <scope>SUBCELLULAR LOCATION</scope>
    <scope>TISSUE SPECIFICITY</scope>
</reference>
<reference key="11">
    <citation type="journal article" date="2008" name="J. Biol. Chem.">
        <title>pLG72 modulates intracellular D-serine levels through its interaction with D-amino acid oxidase: effect on schizophrenia susceptibility.</title>
        <authorList>
            <person name="Sacchi S."/>
            <person name="Bernasconi M."/>
            <person name="Martineau M."/>
            <person name="Mothet J.P."/>
            <person name="Ruzzene M."/>
            <person name="Pilone M.S."/>
            <person name="Pollegioni L."/>
            <person name="Molla G."/>
        </authorList>
    </citation>
    <scope>FUNCTION</scope>
    <scope>CATALYTIC ACTIVITY</scope>
    <scope>ACTIVITY REGULATION</scope>
    <scope>BIOPHYSICOCHEMICAL PROPERTIES</scope>
    <scope>INTERACTION WITH DAOA</scope>
    <scope>SUBCELLULAR LOCATION</scope>
    <scope>TISSUE SPECIFICITY</scope>
</reference>
<reference key="12">
    <citation type="journal article" date="2008" name="Mol. Psychiatry">
        <title>D-amino acid oxidase activity and expression are increased in schizophrenia.</title>
        <authorList>
            <person name="Burnet P.W."/>
            <person name="Eastwood S.L."/>
            <person name="Bristow G.C."/>
            <person name="Godlewska B.R."/>
            <person name="Sikka P."/>
            <person name="Walker M."/>
            <person name="Harrison P.J."/>
        </authorList>
    </citation>
    <scope>TISSUE SPECIFICITY</scope>
</reference>
<reference key="13">
    <citation type="journal article" date="2008" name="Mol. Psychiatry">
        <title>Evidence implicating the candidate schizophrenia/bipolar disorder susceptibility gene G72 in mitochondrial function.</title>
        <authorList>
            <person name="Kvajo M."/>
            <person name="Dhilla A."/>
            <person name="Swor D.E."/>
            <person name="Karayiorgou M."/>
            <person name="Gogos J.A."/>
        </authorList>
    </citation>
    <scope>SUBCELLULAR LOCATION</scope>
</reference>
<reference key="14">
    <citation type="journal article" date="2010" name="Biochimie">
        <title>Thiolactomycin inhibits D-aspartate oxidase: a novel approach to probing the active site environment.</title>
        <authorList>
            <person name="Katane M."/>
            <person name="Saitoh Y."/>
            <person name="Hanai T."/>
            <person name="Sekine M."/>
            <person name="Furuchi T."/>
            <person name="Koyama N."/>
            <person name="Nakagome I."/>
            <person name="Tomoda H."/>
            <person name="Hirono S."/>
            <person name="Homma H."/>
        </authorList>
    </citation>
    <scope>FUNCTION</scope>
    <scope>CATALYTIC ACTIVITY</scope>
    <scope>COFACTOR</scope>
    <scope>ACTIVITY REGULATION</scope>
</reference>
<reference key="15">
    <citation type="journal article" date="2010" name="Protein Sci.">
        <title>Effect of ligand binding on human D-amino acid oxidase: implications for the development of new drugs for schizophrenia treatment.</title>
        <authorList>
            <person name="Caldinelli L."/>
            <person name="Molla G."/>
            <person name="Bracci L."/>
            <person name="Lelli B."/>
            <person name="Pileri S."/>
            <person name="Cappelletti P."/>
            <person name="Sacchi S."/>
            <person name="Pollegioni L."/>
        </authorList>
    </citation>
    <scope>COFACTOR</scope>
    <scope>ACTIVITY REGULATION</scope>
    <scope>INTERACTION WITH DAOA</scope>
</reference>
<reference key="16">
    <citation type="journal article" date="2011" name="Amino Acids">
        <title>Role of the active site residues arginine-216 and arginine-237 in the substrate specificity of mammalian D-aspartate oxidase.</title>
        <authorList>
            <person name="Katane M."/>
            <person name="Saitoh Y."/>
            <person name="Maeda K."/>
            <person name="Hanai T."/>
            <person name="Sekine M."/>
            <person name="Furuchi T."/>
            <person name="Homma H."/>
        </authorList>
    </citation>
    <scope>FUNCTION</scope>
    <scope>CATALYTIC ACTIVITY</scope>
    <scope>ACTIVITY REGULATION</scope>
</reference>
<reference key="17">
    <citation type="journal article" date="2011" name="Mol. Cell. Neurosci.">
        <title>Evidence for the interaction of D-amino acid oxidase with pLG72 in a glial cell line.</title>
        <authorList>
            <person name="Sacchi S."/>
            <person name="Cappelletti P."/>
            <person name="Giovannardi S."/>
            <person name="Pollegioni L."/>
        </authorList>
    </citation>
    <scope>INTERACTION WITH DAOA</scope>
    <scope>SUBCELLULAR LOCATION</scope>
</reference>
<reference key="18">
    <citation type="journal article" date="2013" name="Int. J. Mol. Sci.">
        <title>The C-terminal region of G72 increases D-amino acid oxidase activity.</title>
        <authorList>
            <person name="Chang S.L."/>
            <person name="Hsieh C.H."/>
            <person name="Chen Y.J."/>
            <person name="Wang C.M."/>
            <person name="Shih C.S."/>
            <person name="Huang P.W."/>
            <person name="Mir A."/>
            <person name="Lane H.Y."/>
            <person name="Tsai G.E."/>
            <person name="Chang H.T."/>
        </authorList>
    </citation>
    <scope>INTERACTION WITH DAOA</scope>
</reference>
<reference key="19">
    <citation type="journal article" date="2013" name="J. Med. Chem.">
        <title>Identification of novel D-amino acid oxidase inhibitors by in silico screening and their functional characterization in vitro.</title>
        <authorList>
            <person name="Katane M."/>
            <person name="Osaka N."/>
            <person name="Matsuda S."/>
            <person name="Maeda K."/>
            <person name="Kawata T."/>
            <person name="Saitoh Y."/>
            <person name="Sekine M."/>
            <person name="Furuchi T."/>
            <person name="Doi I."/>
            <person name="Hirono S."/>
            <person name="Homma H."/>
        </authorList>
    </citation>
    <scope>FUNCTION</scope>
    <scope>CATALYTIC ACTIVITY</scope>
    <scope>ACTIVITY REGULATION</scope>
    <scope>MUTAGENESIS OF TYR-224</scope>
</reference>
<reference key="20">
    <citation type="journal article" date="2014" name="Biosci. Trends">
        <title>Evaluation of human D-amino acid oxidase inhibition by anti-psychotic drugs in vitro.</title>
        <authorList>
            <person name="Shishikura M."/>
            <person name="Hakariya H."/>
            <person name="Iwasa S."/>
            <person name="Yoshio T."/>
            <person name="Ichiba H."/>
            <person name="Yorita K."/>
            <person name="Fukui K."/>
            <person name="Fukushima T."/>
        </authorList>
    </citation>
    <scope>FUNCTION</scope>
    <scope>CATALYTIC ACTIVITY</scope>
    <scope>ACTIVITY REGULATION</scope>
    <scope>BIOPHYSICOCHEMICAL PROPERTIES</scope>
</reference>
<reference key="21">
    <citation type="journal article" date="2014" name="J. Proteomics">
        <title>An enzyme assisted RP-RPLC approach for in-depth analysis of human liver phosphoproteome.</title>
        <authorList>
            <person name="Bian Y."/>
            <person name="Song C."/>
            <person name="Cheng K."/>
            <person name="Dong M."/>
            <person name="Wang F."/>
            <person name="Huang J."/>
            <person name="Sun D."/>
            <person name="Wang L."/>
            <person name="Ye M."/>
            <person name="Zou H."/>
        </authorList>
    </citation>
    <scope>IDENTIFICATION BY MASS SPECTROMETRY [LARGE SCALE ANALYSIS]</scope>
    <source>
        <tissue>Liver</tissue>
    </source>
</reference>
<reference key="22">
    <citation type="journal article" date="2017" name="Biochim. Biophys. Acta">
        <title>Structure-function relationships in human d-aspartate oxidase: characterisation of variants corresponding to known single nucleotide polymorphisms.</title>
        <authorList>
            <person name="Katane M."/>
            <person name="Kanazawa R."/>
            <person name="Kobayashi R."/>
            <person name="Oishi M."/>
            <person name="Nakayama K."/>
            <person name="Saitoh Y."/>
            <person name="Miyamoto T."/>
            <person name="Sekine M."/>
            <person name="Homma H."/>
        </authorList>
    </citation>
    <scope>SUBUNIT</scope>
</reference>
<reference key="23">
    <citation type="journal article" date="2016" name="Nat. Microbiol.">
        <title>Interplay between microbial d-amino acids and host d-amino acid oxidase modifies murine mucosal defence and gut microbiota.</title>
        <authorList>
            <person name="Sasabe J."/>
            <person name="Miyoshi Y."/>
            <person name="Rakoff-Nahoum S."/>
            <person name="Zhang T."/>
            <person name="Mita M."/>
            <person name="Davis B.M."/>
            <person name="Hamase K."/>
            <person name="Waldor M.K."/>
        </authorList>
    </citation>
    <scope>SUBCELLULAR LOCATION</scope>
    <scope>TISSUE SPECIFICITY</scope>
</reference>
<reference key="24">
    <citation type="journal article" date="2017" name="Front. Mol. Biosci.">
        <title>Biochemical Properties of Human D-Amino Acid Oxidase.</title>
        <authorList>
            <person name="Murtas G."/>
            <person name="Sacchi S."/>
            <person name="Valentino M."/>
            <person name="Pollegioni L."/>
        </authorList>
    </citation>
    <scope>FUNCTION</scope>
    <scope>CATALYTIC ACTIVITY</scope>
    <scope>COFACTOR</scope>
    <scope>BIOPHYSICOCHEMICAL PROPERTIES</scope>
</reference>
<reference key="25">
    <citation type="journal article" date="2018" name="Biochim. Biophys. Acta">
        <title>Human d-amino acid oxidase: The inactive G183R variant.</title>
        <authorList>
            <person name="Murtas G."/>
            <person name="Caldinelli L."/>
            <person name="Cappelletti P."/>
            <person name="Sacchi S."/>
            <person name="Pollegioni L."/>
        </authorList>
    </citation>
    <scope>FUNCTION</scope>
    <scope>CATALYTIC ACTIVITY</scope>
    <scope>COFACTOR</scope>
    <scope>SUBUNIT</scope>
    <scope>SUBCELLULAR LOCATION</scope>
    <scope>MUTAGENESIS OF GLY-183</scope>
</reference>
<reference key="26">
    <citation type="journal article" date="2019" name="Front. Mol. Biosci.">
        <title>Substitution of Arginine 120 in Human D-Amino Acid Oxidase Favors FAD-Binding and Nuclear Mistargeting.</title>
        <authorList>
            <person name="Murtas G."/>
            <person name="Sacchi S."/>
            <person name="Pollegioni L."/>
        </authorList>
    </citation>
    <scope>FUNCTION</scope>
    <scope>CATALYTIC ACTIVITY</scope>
    <scope>COFACTOR</scope>
    <scope>BIOPHYSICOCHEMICAL PROPERTIES</scope>
    <scope>SUBCELLULAR LOCATION</scope>
    <scope>MUTAGENESIS OF ARG-120</scope>
</reference>
<reference key="27">
    <citation type="journal article" date="2019" name="J. Biochem.">
        <title>Age- and gender-dependent D-amino acid oxidase activity in mouse brain and peripheral tissues: implication for aging and neurodegeneration.</title>
        <authorList>
            <person name="Kim S.H."/>
            <person name="Shishido Y."/>
            <person name="Sogabe H."/>
            <person name="Rachadech W."/>
            <person name="Yorita K."/>
            <person name="Kato Y."/>
            <person name="Fukui K."/>
        </authorList>
    </citation>
    <scope>FUNCTION</scope>
    <scope>CATALYTIC ACTIVITY</scope>
</reference>
<reference key="28">
    <citation type="journal article" date="2019" name="Life. Sci Alliance">
        <title>d-amino acid oxidase promotes cellular senescence via the production of reactive oxygen species.</title>
        <authorList>
            <person name="Nagano T."/>
            <person name="Yamao S."/>
            <person name="Terachi A."/>
            <person name="Yarimizu H."/>
            <person name="Itoh H."/>
            <person name="Katasho R."/>
            <person name="Kawai K."/>
            <person name="Nakashima A."/>
            <person name="Iwasaki T."/>
            <person name="Kikkawa U."/>
            <person name="Kamada S."/>
        </authorList>
    </citation>
    <scope>FUNCTION</scope>
    <scope>INDUCTION</scope>
</reference>
<reference key="29">
    <citation type="journal article" date="2021" name="Cell. Mol. Life Sci.">
        <title>Antimicrobial D-amino acid oxidase-derived peptides specify gut microbiota.</title>
        <authorList>
            <person name="Murtas G."/>
            <person name="Sacchi S."/>
            <person name="Tedeschi G."/>
            <person name="Maffioli E."/>
            <person name="Notomista E."/>
            <person name="Cafaro V."/>
            <person name="Abbondi M."/>
            <person name="Mothet J.P."/>
            <person name="Pollegioni L."/>
        </authorList>
    </citation>
    <scope>FUNCTION</scope>
    <scope>CATALYTIC ACTIVITY</scope>
    <scope>ACTIVITY REGULATION</scope>
</reference>
<reference key="30">
    <citation type="journal article" date="2021" name="Front. Mol. Biosci.">
        <title>Yin and Yang in Post-Translational Modifications of Human D-Amino Acid Oxidase.</title>
        <authorList>
            <person name="Sacchi S."/>
            <person name="Rabattoni V."/>
            <person name="Miceli M."/>
            <person name="Pollegioni L."/>
        </authorList>
    </citation>
    <scope>FUNCTION</scope>
    <scope>CATALYTIC ACTIVITY</scope>
    <scope>COFACTOR</scope>
    <scope>TISSUE SPECIFICITY</scope>
    <scope>PHOSPHORYLATION</scope>
    <scope>S-NITROSYLATION</scope>
</reference>
<reference key="31">
    <citation type="journal article" date="2023" name="Neurochem. Res.">
        <title>Luvadaxistat: A Novel Potent and Selective D-Amino Acid Oxidase Inhibitor Improves Cognitive and Social Deficits in Rodent Models for Schizophrenia.</title>
        <authorList>
            <person name="Fradley R."/>
            <person name="Goetghebeur P."/>
            <person name="Miller D."/>
            <person name="Burley R."/>
            <person name="Almond S."/>
            <person name="Gruart I."/>
            <person name="Masso A."/>
            <person name="Delgado Garcia J.M."/>
            <person name="Zhu B."/>
            <person name="Howley E."/>
            <person name="Neill J.C."/>
            <person name="Grayson B."/>
            <person name="Gaskin P."/>
            <person name="Carlton M."/>
            <person name="Gray I."/>
            <person name="Serrats J."/>
            <person name="Davies C.H."/>
        </authorList>
    </citation>
    <scope>ACTIVITY REGULATION</scope>
</reference>
<reference key="32">
    <citation type="journal article" date="2023" name="Neurochem. Res.">
        <authorList>
            <person name="Fradley R."/>
            <person name="Goetghebeur P."/>
            <person name="Miller D."/>
            <person name="Burley R."/>
            <person name="Almond S."/>
            <person name="Gruart I."/>
            <person name="Masso A."/>
            <person name="Delgado Garcia J.M."/>
            <person name="Zhu B."/>
            <person name="Howley E."/>
            <person name="Neill J.C."/>
            <person name="Grayson B."/>
            <person name="Gaskin P."/>
            <person name="Carlton M."/>
            <person name="Gray I."/>
            <person name="Serrats J."/>
            <person name="Davies C.H."/>
        </authorList>
    </citation>
    <scope>ERRATUM OF PUBMED:37289348</scope>
</reference>
<reference evidence="60" key="33">
    <citation type="journal article" date="2006" name="Protein Sci.">
        <title>Crystal structure of human D-amino acid oxidase: context-dependent variability of the backbone conformation of the VAAGL hydrophobic stretch located at the si-face of the flavin ring.</title>
        <authorList>
            <person name="Kawazoe T."/>
            <person name="Tsuge H."/>
            <person name="Pilone M.S."/>
            <person name="Fukui K."/>
        </authorList>
    </citation>
    <scope>X-RAY CRYSTALLOGRAPHY (2.5 ANGSTROMS) IN COMPLEX WITH FAD AND THE INHIBITOR BENZOIC ACID</scope>
    <scope>FUNCTION</scope>
    <scope>CATALYTIC ACTIVITY</scope>
    <scope>COFACTOR</scope>
    <scope>BIOPHYSICOCHEMICAL PROPERTIES</scope>
    <scope>SUBUNIT</scope>
</reference>
<reference evidence="61 62 63 64" key="34">
    <citation type="journal article" date="2007" name="Biochem. Biophys. Res. Commun.">
        <title>Structural basis of D-DOPA oxidation by D-amino acid oxidase: alternative pathway for dopamine biosynthesis.</title>
        <authorList>
            <person name="Kawazoe T."/>
            <person name="Tsuge H."/>
            <person name="Imagawa T."/>
            <person name="Aki K."/>
            <person name="Kuramitsu S."/>
            <person name="Fukui K."/>
        </authorList>
    </citation>
    <scope>X-RAY CRYSTALLOGRAPHY (2.6 ANGSTROMS) IN COMPLEXES WITH FAD AND IMINO-SERINE; IMINO-DOPA AND ANTHRANILATE</scope>
    <scope>FUNCTION</scope>
    <scope>CATALYTIC ACTIVITY</scope>
    <scope>COFACTOR</scope>
    <scope>BIOPHYSICOCHEMICAL PROPERTIES</scope>
</reference>
<reference evidence="65" key="35">
    <citation type="journal article" date="2008" name="Bioorg. Med. Chem. Lett.">
        <title>The discovery of fused pyrrole carboxylic acids as novel, potent D-amino acid oxidase (DAO) inhibitors.</title>
        <authorList>
            <person name="Sparey T."/>
            <person name="Abeywickrema P."/>
            <person name="Almond S."/>
            <person name="Brandon N."/>
            <person name="Byrne N."/>
            <person name="Campbell A."/>
            <person name="Hutson P.H."/>
            <person name="Jacobson M."/>
            <person name="Jones B."/>
            <person name="Munshi S."/>
            <person name="Pascarella D."/>
            <person name="Pike A."/>
            <person name="Prasad G.S."/>
            <person name="Sachs N."/>
            <person name="Sakatis M."/>
            <person name="Sardana V."/>
            <person name="Venkatraman S."/>
            <person name="Young M.B."/>
        </authorList>
    </citation>
    <scope>X-RAY CRYSTALLOGRAPHY (2.49 ANGSTROMS) IN COMPLEX WITH FAD AND SYNTHETIC INHIBITOR</scope>
    <scope>COFACTOR</scope>
    <scope>SUBUNIT</scope>
</reference>
<reference evidence="66" key="36">
    <citation type="journal article" date="2009" name="J. Med. Chem.">
        <title>Discovery, SAR, and pharmacokinetics of a novel 3-hydroxyquinolin-2(1H)-one series of potent D-amino acid oxidase (DAAO) inhibitors.</title>
        <authorList>
            <person name="Duplantier A.J."/>
            <person name="Becker S.L."/>
            <person name="Bohanon M.J."/>
            <person name="Borzilleri K.A."/>
            <person name="Chrunyk B.A."/>
            <person name="Downs J.T."/>
            <person name="Hu L.Y."/>
            <person name="El-Kattan A."/>
            <person name="James L.C."/>
            <person name="Liu S."/>
            <person name="Lu J."/>
            <person name="Maklad N."/>
            <person name="Mansour M.N."/>
            <person name="Mente S."/>
            <person name="Piotrowski M.A."/>
            <person name="Sakya S.M."/>
            <person name="Sheehan S."/>
            <person name="Steyn S.J."/>
            <person name="Strick C.A."/>
            <person name="Williams V.A."/>
            <person name="Zhang L."/>
        </authorList>
    </citation>
    <scope>X-RAY CRYSTALLOGRAPHY (2.20 ANGSTROMS) IN COMPLEX WITH FAD AND INHIBITOR 3-HYDROXYQUINOLIN-2(1H)-ONE</scope>
    <scope>COFACTOR</scope>
    <scope>ACTIVITY REGULATION</scope>
</reference>
<reference evidence="67 68 69" key="37">
    <citation type="journal article" date="2013" name="J. Med. Chem.">
        <title>4-Hydroxypyridazin-3(2H)-one derivatives as novel D-amino acid oxidase inhibitors.</title>
        <authorList>
            <person name="Hondo T."/>
            <person name="Warizaya M."/>
            <person name="Niimi T."/>
            <person name="Namatame I."/>
            <person name="Yamaguchi T."/>
            <person name="Nakanishi K."/>
            <person name="Hamajima T."/>
            <person name="Harada K."/>
            <person name="Sakashita H."/>
            <person name="Matsumoto Y."/>
            <person name="Orita M."/>
            <person name="Takeuchi M."/>
        </authorList>
    </citation>
    <scope>X-RAY CRYSTALLOGRAPHY (2.50 ANGSTROMS) IN COMPLEX WITH FAD</scope>
    <scope>COFACTOR</scope>
    <scope>ACTIVITY REGULATION</scope>
</reference>
<reference evidence="70 71 72 73" key="38">
    <citation type="journal article" date="2013" name="J. Med. Chem.">
        <title>Structural, kinetic, and pharmacodynamic mechanisms of D-amino acid oxidase inhibition by small molecules.</title>
        <authorList>
            <person name="Hopkins S.C."/>
            <person name="Heffernan M.L."/>
            <person name="Saraswat L.D."/>
            <person name="Bowen C.A."/>
            <person name="Melnick L."/>
            <person name="Hardy L.W."/>
            <person name="Orsini M.A."/>
            <person name="Allen M.S."/>
            <person name="Koch P."/>
            <person name="Spear K.L."/>
            <person name="Foglesong R.J."/>
            <person name="Soukri M."/>
            <person name="Chytil M."/>
            <person name="Fang Q.K."/>
            <person name="Jones S.W."/>
            <person name="Varney M.A."/>
            <person name="Panatier A."/>
            <person name="Oliet S.H."/>
            <person name="Pollegioni L."/>
            <person name="Piubelli L."/>
            <person name="Molla G."/>
            <person name="Nardini M."/>
            <person name="Large T.H."/>
        </authorList>
    </citation>
    <scope>X-RAY CRYSTALLOGRAPHY (1.90 ANGSTROMS) IN COMPLEX WITH FAD AND INHIBITOR 4H-THIENO[3,2-B]PYROLE-5-CARBOXYLIC ACID</scope>
    <scope>COFACTOR</scope>
    <scope>ACTIVITY REGULATION</scope>
</reference>
<reference evidence="74 75" key="39">
    <citation type="journal article" date="2014" name="Biosci. Rep.">
        <title>Novel human D-amino acid oxidase inhibitors stabilize an active-site lid-open conformation.</title>
        <authorList>
            <person name="Terry-Lorenzo R.T."/>
            <person name="Chun L.E."/>
            <person name="Brown S.P."/>
            <person name="Heffernan M.L."/>
            <person name="Fang Q.K."/>
            <person name="Orsini M.A."/>
            <person name="Pollegioni L."/>
            <person name="Hardy L.W."/>
            <person name="Spear K.L."/>
            <person name="Large T.H."/>
        </authorList>
    </citation>
    <scope>X-RAY CRYSTALLOGRAPHY (2.40 ANGSTROMS) IN COMPLEX WITH FAD AND INHIBITOR 4-HYDROXY-6-[2-(7-HYDROXY-2-OXO-4-PHENYL-2H-CHROMEN-6- YL)ETHYL]PYRIDAZIN-3(2H)-ONE</scope>
    <scope>COFACTOR</scope>
    <scope>ACTIVITY REGULATION</scope>
</reference>
<reference evidence="76 77" key="40">
    <citation type="journal article" date="2018" name="Eur. J. Med. Chem.">
        <title>Structural basis for potent inhibition of d-amino acid oxidase by thiophene carboxylic acids.</title>
        <authorList>
            <person name="Kato Y."/>
            <person name="Hin N."/>
            <person name="Maita N."/>
            <person name="Thomas A.G."/>
            <person name="Kurosawa S."/>
            <person name="Rojas C."/>
            <person name="Yorita K."/>
            <person name="Slusher B.S."/>
            <person name="Fukui K."/>
            <person name="Tsukamoto T."/>
        </authorList>
    </citation>
    <scope>X-RAY CRYSTALLOGRAPHY (2.60 ANGSTROMS) OF 1-340 IN COMPLEX WITH FAD AND INHIBITOR 5-CHLORO THIOPHENE-3-CARBOXYLIC ACID</scope>
    <scope>COFACTOR</scope>
    <scope>ACTIVITY REGULATION</scope>
</reference>
<reference evidence="78" key="41">
    <citation type="journal article" date="2020" name="J. Biochem.">
        <title>P219L substitution in human D-amino acid oxidase impacts the ligand binding and catalytic efficiency.</title>
        <authorList>
            <person name="Rachadech W."/>
            <person name="Kato Y."/>
            <person name="Abou El-Magd R.M."/>
            <person name="Shishido Y."/>
            <person name="Kim S.H."/>
            <person name="Sogabe H."/>
            <person name="Maita N."/>
            <person name="Yorita K."/>
            <person name="Fukui K."/>
        </authorList>
    </citation>
    <scope>X-RAY CRYSTALLOGRAPHY (2.25 ANGSTROMS) OF 1-338 OF MUTANT LEU-219 IN COMPLEX WITH FAD AND INHIBITOR BENZOATE</scope>
    <scope>FUNCTION</scope>
    <scope>CATALYTIC ACTIVITY</scope>
    <scope>COFACTOR</scope>
    <scope>ACTIVITY REGULATION</scope>
    <scope>BIOPHYSICOCHEMICAL PROPERTIES</scope>
    <scope>MUTAGENESIS OF PRO-219</scope>
</reference>
<reference evidence="79 80" key="42">
    <citation type="journal article" date="2022" name="J. Med. Chem.">
        <title>Discovery of a Novel Class of d-Amino Acid Oxidase Inhibitors Using the Schrodinger Computational Platform.</title>
        <authorList>
            <person name="Tang H."/>
            <person name="Jensen K."/>
            <person name="Houang E."/>
            <person name="McRobb F.M."/>
            <person name="Bhat S."/>
            <person name="Svensson M."/>
            <person name="Bochevarov A."/>
            <person name="Day T."/>
            <person name="Dahlgren M.K."/>
            <person name="Bell J.A."/>
            <person name="Frye L."/>
            <person name="Skene R.J."/>
            <person name="Lewis J.H."/>
            <person name="Osborne J.D."/>
            <person name="Tierney J.P."/>
            <person name="Gordon J.A."/>
            <person name="Palomero M.A."/>
            <person name="Gallati C."/>
            <person name="Chapman R.S.L."/>
            <person name="Jones D.R."/>
            <person name="Hirst K.L."/>
            <person name="Sephton M."/>
            <person name="Chauhan A."/>
            <person name="Sharpe A."/>
            <person name="Tardia P."/>
            <person name="Dechaux E.A."/>
            <person name="Taylor A."/>
            <person name="Waddell R.D."/>
            <person name="Valentine A."/>
            <person name="Janssens H.B."/>
            <person name="Aziz O."/>
            <person name="Bloomfield D.E."/>
            <person name="Ladha S."/>
            <person name="Fraser I.J."/>
            <person name="Ellard J.M."/>
        </authorList>
    </citation>
    <scope>X-RAY CRYSTALLOGRAPHY (1.66 ANGSTROMS) IN COMPLEX WITH FAD AND INHIBITOR (3R)-3-(5,6-DIOXO-1,4,5,6-TETRAHYDROPYRAZIN-2-YL)-2,3- DIHYDRO-1,4-BENZOXATHIINE-7-CARBONITRILE</scope>
    <scope>COFACTOR</scope>
    <scope>ACTIVITY REGULATION</scope>
</reference>
<reference evidence="81" key="43">
    <citation type="journal article" date="2024" name="Int. J. Biol. Macromol.">
        <title>Structural and mechanistic insights into ALS patient derived mutations in D-amino acid oxidase.</title>
        <authorList>
            <person name="Khan S."/>
            <person name="Upadhyay S."/>
            <person name="Dave U."/>
            <person name="Kumar A."/>
            <person name="Gomes J."/>
        </authorList>
    </citation>
    <scope>X-RAY CRYSTALLOGRAPHY (2.10 ANGSTROMS) OF VARIANT ALS HIS-38 IN COMPLEX WITH FAD AND INHIBITOR BENZOATE</scope>
    <scope>FUNCTION</scope>
    <scope>CATALYTIC ACTIVITY</scope>
    <scope>COFACTOR</scope>
    <scope>BIOPHYSICOCHEMICAL PROPERTIES</scope>
    <scope>SUBUNIT</scope>
    <scope>CHARACTERIZATION OF VARIANTS ALS HIS-38; TRP-199 AND ARG-201</scope>
</reference>
<reference key="44">
    <citation type="journal article" date="2010" name="Proc. Natl. Acad. Sci. U.S.A.">
        <title>Familial amyotrophic lateral sclerosis is associated with a mutation in D-amino acid oxidase.</title>
        <authorList>
            <person name="Mitchell J."/>
            <person name="Paul P."/>
            <person name="Chen H.J."/>
            <person name="Morris A."/>
            <person name="Payling M."/>
            <person name="Falchi M."/>
            <person name="Habgood J."/>
            <person name="Panoutsou S."/>
            <person name="Winkler S."/>
            <person name="Tisato V."/>
            <person name="Hajitou A."/>
            <person name="Smith B."/>
            <person name="Vance C."/>
            <person name="Shaw C."/>
            <person name="Mazarakis N.D."/>
            <person name="de Belleroche J."/>
        </authorList>
    </citation>
    <scope>CHARACTERIZATION OF VARIANT ALS TRP-199</scope>
    <scope>FUNCTION</scope>
    <scope>CATALYTIC ACTIVITY</scope>
    <scope>SUBUNIT</scope>
    <scope>SUBCELLULAR LOCATION</scope>
</reference>
<reference key="45">
    <citation type="journal article" date="2010" name="Proc. Natl. Acad. Sci. U.S.A.">
        <title>Questioning on the role of D amino acid oxidase in familial amyotrophic lateral sclerosis.</title>
        <authorList>
            <person name="Millecamps S."/>
            <person name="Da Barroca S."/>
            <person name="Cazeneuve C."/>
            <person name="Salachas F."/>
            <person name="Pradat P.F."/>
            <person name="Danel-Brunaud V."/>
            <person name="Vandenberghe N."/>
            <person name="Lacomblez L."/>
            <person name="Le Forestier N."/>
            <person name="Bruneteau G."/>
            <person name="Camu W."/>
            <person name="Brice A."/>
            <person name="Meininger V."/>
            <person name="LeGuern E."/>
        </authorList>
    </citation>
    <scope>VARIANT ALS HIS-38</scope>
</reference>
<reference key="46">
    <citation type="journal article" date="2012" name="Proc. Natl. Acad. Sci. U.S.A.">
        <title>D-amino acid oxidase controls motoneuron degeneration through D-serine.</title>
        <authorList>
            <person name="Sasabe J."/>
            <person name="Miyoshi Y."/>
            <person name="Suzuki M."/>
            <person name="Mita M."/>
            <person name="Konno R."/>
            <person name="Matsuoka M."/>
            <person name="Hamase K."/>
            <person name="Aiso S."/>
        </authorList>
    </citation>
    <scope>CHARACTERIZATION OF VARIANT ALS TRP-199</scope>
    <scope>FUNCTION</scope>
    <scope>CATALYTIC ACTIVITY</scope>
</reference>
<reference key="47">
    <citation type="journal article" date="2013" name="Biochim. Biophys. Acta">
        <title>Characterization of human DAAO variants potentially related to an increased risk of schizophrenia.</title>
        <authorList>
            <person name="Caldinelli L."/>
            <person name="Sacchi S."/>
            <person name="Molla G."/>
            <person name="Nardini M."/>
            <person name="Pollegioni L."/>
        </authorList>
    </citation>
    <scope>CHARACTERIZATION OF VARIANT VAL-331</scope>
    <scope>FUNCTION</scope>
    <scope>CATALYTIC ACTIVITY</scope>
    <scope>BIOPHYSICOCHEMICAL PROPERTIES</scope>
    <scope>SUBCELLULAR LOCATION</scope>
    <scope>MUTAGENESIS OF ASP-31 AND ARG-279</scope>
</reference>
<reference key="48">
    <citation type="journal article" date="2014" name="Neurobiol. Aging">
        <title>Pathogenic effects of amyotrophic lateral sclerosis-linked mutation in D-amino acid oxidase are mediated by D-serine.</title>
        <authorList>
            <person name="Paul P."/>
            <person name="Murphy T."/>
            <person name="Oseni Z."/>
            <person name="Sivalokanathan S."/>
            <person name="de Belleroche J.S."/>
        </authorList>
    </citation>
    <scope>CHARACTERIZATION OF VARIANT ALS TRP-199</scope>
    <scope>TISSUE SPECIFICITY</scope>
    <scope>MUTAGENESIS OF GLY-183</scope>
</reference>
<reference key="49">
    <citation type="journal article" date="2015" name="Biochim. Biophys. Acta">
        <title>Structure-function relationships in human d-amino acid oxidase variants corresponding to known SNPs.</title>
        <authorList>
            <person name="Cappelletti P."/>
            <person name="Piubelli L."/>
            <person name="Murtas G."/>
            <person name="Caldinelli L."/>
            <person name="Valentino M."/>
            <person name="Molla G."/>
            <person name="Pollegioni L."/>
            <person name="Sacchi S."/>
        </authorList>
    </citation>
    <scope>CHARACTERIZATION OF VARIANTS ALS TRP-199; GLN-199 AND ARG-209</scope>
    <scope>FUNCTION</scope>
    <scope>CATALYTIC ACTIVITY</scope>
    <scope>COFACTOR</scope>
    <scope>BIOPHYSICOCHEMICAL PROPERTIES</scope>
</reference>
<reference key="50">
    <citation type="journal article" date="2023" name="Biochim. Biophys. Acta">
        <title>Characterization of E121K mutation of D-amino acid oxidase - Insights into mechanisms leading to amyotrophic lateral sclerosis.</title>
        <authorList>
            <person name="Dave U."/>
            <person name="Khan S."/>
            <person name="Gomes J."/>
        </authorList>
    </citation>
    <scope>CHARACTERIZATION OF VARIANT ALS LYS-121</scope>
    <scope>FUNCTION</scope>
    <scope>CATALYTIC ACTIVITY</scope>
    <scope>COFACTOR</scope>
    <scope>BIOPHYSICOCHEMICAL PROPERTIES</scope>
    <scope>SUBUNIT</scope>
</reference>
<reference key="51">
    <citation type="journal article" date="2024" name="J. Neurol. Sci.">
        <title>Aggregation of E121K mutant D-amino acid oxidase and ubiquitination-mediated autophagy mechanisms leading to amyotrophic lateral sclerosis.</title>
        <authorList>
            <person name="Dave U."/>
            <person name="Narain P."/>
            <person name="Mishra D."/>
            <person name="Gomes J."/>
        </authorList>
    </citation>
    <scope>CHARACTERIZATION OF VARIANT ALS LYS-121</scope>
</reference>
<accession>P14920</accession>
<accession>B2R7I5</accession>
<accession>Q16758</accession>
<accession>Q8N6R2</accession>